<reference key="1">
    <citation type="journal article" date="1997" name="J. Biol. Chem.">
        <title>Cell cycle-dependent expression and spindle pole localization of a novel human protein kinase, Aik, related to Aurora of Drosophila and yeast Ipl1.</title>
        <authorList>
            <person name="Kimura M."/>
            <person name="Kotani S."/>
            <person name="Hattori T."/>
            <person name="Sumi N."/>
            <person name="Yoshioka T."/>
            <person name="Todokoro K."/>
            <person name="Okano Y."/>
        </authorList>
    </citation>
    <scope>NUCLEOTIDE SEQUENCE [MRNA]</scope>
    <scope>INDUCTION</scope>
    <scope>SUBCELLULAR LOCATION</scope>
    <scope>VARIANT VAL-57</scope>
    <source>
        <tissue>Blood</tissue>
    </source>
</reference>
<reference key="2">
    <citation type="journal article" date="1998" name="Biochem. Biophys. Res. Commun.">
        <title>cDNA cloning, expression, subcellular localization, and chromosomal assignment of mammalian aurora homologues, aurora-related kinase (ARK) 1 and 2.</title>
        <authorList>
            <person name="Shindo M."/>
            <person name="Nakano H."/>
            <person name="Kuroyanagi H."/>
            <person name="Shirasawa T."/>
            <person name="Mihara M."/>
            <person name="Gilbert D.J."/>
            <person name="Jenkins N.A."/>
            <person name="Copeland N.G."/>
            <person name="Yagita H."/>
            <person name="Okumura K."/>
        </authorList>
    </citation>
    <scope>NUCLEOTIDE SEQUENCE [MRNA]</scope>
    <scope>VARIANT VAL-57</scope>
</reference>
<reference key="3">
    <citation type="journal article" date="1998" name="Nat. Genet.">
        <title>Tumour amplified kinase STK15/BTAK induces centrosome amplification, aneuploidy and transformation.</title>
        <authorList>
            <person name="Zhou H."/>
            <person name="Kuang J."/>
            <person name="Zhong L."/>
            <person name="Kuo W.-L."/>
            <person name="Gray J.W."/>
            <person name="Sahin A."/>
            <person name="Brinkley B.R."/>
            <person name="Sen S."/>
        </authorList>
    </citation>
    <scope>NUCLEOTIDE SEQUENCE [MRNA]</scope>
    <scope>VARIANTS ILE-31 AND VAL-57</scope>
    <source>
        <tissue>Mammary gland</tissue>
    </source>
</reference>
<reference key="4">
    <citation type="submission" date="1999-10" db="EMBL/GenBank/DDBJ databases">
        <title>Mutational analysis of the STK15 gene in human tumors.</title>
        <authorList>
            <person name="Wang L."/>
            <person name="Thibodeau S.N."/>
        </authorList>
    </citation>
    <scope>NUCLEOTIDE SEQUENCE [GENOMIC DNA]</scope>
</reference>
<reference key="5">
    <citation type="journal article" date="2001" name="Nature">
        <title>The DNA sequence and comparative analysis of human chromosome 20.</title>
        <authorList>
            <person name="Deloukas P."/>
            <person name="Matthews L.H."/>
            <person name="Ashurst J.L."/>
            <person name="Burton J."/>
            <person name="Gilbert J.G.R."/>
            <person name="Jones M."/>
            <person name="Stavrides G."/>
            <person name="Almeida J.P."/>
            <person name="Babbage A.K."/>
            <person name="Bagguley C.L."/>
            <person name="Bailey J."/>
            <person name="Barlow K.F."/>
            <person name="Bates K.N."/>
            <person name="Beard L.M."/>
            <person name="Beare D.M."/>
            <person name="Beasley O.P."/>
            <person name="Bird C.P."/>
            <person name="Blakey S.E."/>
            <person name="Bridgeman A.M."/>
            <person name="Brown A.J."/>
            <person name="Buck D."/>
            <person name="Burrill W.D."/>
            <person name="Butler A.P."/>
            <person name="Carder C."/>
            <person name="Carter N.P."/>
            <person name="Chapman J.C."/>
            <person name="Clamp M."/>
            <person name="Clark G."/>
            <person name="Clark L.N."/>
            <person name="Clark S.Y."/>
            <person name="Clee C.M."/>
            <person name="Clegg S."/>
            <person name="Cobley V.E."/>
            <person name="Collier R.E."/>
            <person name="Connor R.E."/>
            <person name="Corby N.R."/>
            <person name="Coulson A."/>
            <person name="Coville G.J."/>
            <person name="Deadman R."/>
            <person name="Dhami P.D."/>
            <person name="Dunn M."/>
            <person name="Ellington A.G."/>
            <person name="Frankland J.A."/>
            <person name="Fraser A."/>
            <person name="French L."/>
            <person name="Garner P."/>
            <person name="Grafham D.V."/>
            <person name="Griffiths C."/>
            <person name="Griffiths M.N.D."/>
            <person name="Gwilliam R."/>
            <person name="Hall R.E."/>
            <person name="Hammond S."/>
            <person name="Harley J.L."/>
            <person name="Heath P.D."/>
            <person name="Ho S."/>
            <person name="Holden J.L."/>
            <person name="Howden P.J."/>
            <person name="Huckle E."/>
            <person name="Hunt A.R."/>
            <person name="Hunt S.E."/>
            <person name="Jekosch K."/>
            <person name="Johnson C.M."/>
            <person name="Johnson D."/>
            <person name="Kay M.P."/>
            <person name="Kimberley A.M."/>
            <person name="King A."/>
            <person name="Knights A."/>
            <person name="Laird G.K."/>
            <person name="Lawlor S."/>
            <person name="Lehvaeslaiho M.H."/>
            <person name="Leversha M.A."/>
            <person name="Lloyd C."/>
            <person name="Lloyd D.M."/>
            <person name="Lovell J.D."/>
            <person name="Marsh V.L."/>
            <person name="Martin S.L."/>
            <person name="McConnachie L.J."/>
            <person name="McLay K."/>
            <person name="McMurray A.A."/>
            <person name="Milne S.A."/>
            <person name="Mistry D."/>
            <person name="Moore M.J.F."/>
            <person name="Mullikin J.C."/>
            <person name="Nickerson T."/>
            <person name="Oliver K."/>
            <person name="Parker A."/>
            <person name="Patel R."/>
            <person name="Pearce T.A.V."/>
            <person name="Peck A.I."/>
            <person name="Phillimore B.J.C.T."/>
            <person name="Prathalingam S.R."/>
            <person name="Plumb R.W."/>
            <person name="Ramsay H."/>
            <person name="Rice C.M."/>
            <person name="Ross M.T."/>
            <person name="Scott C.E."/>
            <person name="Sehra H.K."/>
            <person name="Shownkeen R."/>
            <person name="Sims S."/>
            <person name="Skuce C.D."/>
            <person name="Smith M.L."/>
            <person name="Soderlund C."/>
            <person name="Steward C.A."/>
            <person name="Sulston J.E."/>
            <person name="Swann R.M."/>
            <person name="Sycamore N."/>
            <person name="Taylor R."/>
            <person name="Tee L."/>
            <person name="Thomas D.W."/>
            <person name="Thorpe A."/>
            <person name="Tracey A."/>
            <person name="Tromans A.C."/>
            <person name="Vaudin M."/>
            <person name="Wall M."/>
            <person name="Wallis J.M."/>
            <person name="Whitehead S.L."/>
            <person name="Whittaker P."/>
            <person name="Willey D.L."/>
            <person name="Williams L."/>
            <person name="Williams S.A."/>
            <person name="Wilming L."/>
            <person name="Wray P.W."/>
            <person name="Hubbard T."/>
            <person name="Durbin R.M."/>
            <person name="Bentley D.R."/>
            <person name="Beck S."/>
            <person name="Rogers J."/>
        </authorList>
    </citation>
    <scope>NUCLEOTIDE SEQUENCE [LARGE SCALE GENOMIC DNA]</scope>
</reference>
<reference key="6">
    <citation type="submission" date="2005-09" db="EMBL/GenBank/DDBJ databases">
        <authorList>
            <person name="Mural R.J."/>
            <person name="Istrail S."/>
            <person name="Sutton G.G."/>
            <person name="Florea L."/>
            <person name="Halpern A.L."/>
            <person name="Mobarry C.M."/>
            <person name="Lippert R."/>
            <person name="Walenz B."/>
            <person name="Shatkay H."/>
            <person name="Dew I."/>
            <person name="Miller J.R."/>
            <person name="Flanigan M.J."/>
            <person name="Edwards N.J."/>
            <person name="Bolanos R."/>
            <person name="Fasulo D."/>
            <person name="Halldorsson B.V."/>
            <person name="Hannenhalli S."/>
            <person name="Turner R."/>
            <person name="Yooseph S."/>
            <person name="Lu F."/>
            <person name="Nusskern D.R."/>
            <person name="Shue B.C."/>
            <person name="Zheng X.H."/>
            <person name="Zhong F."/>
            <person name="Delcher A.L."/>
            <person name="Huson D.H."/>
            <person name="Kravitz S.A."/>
            <person name="Mouchard L."/>
            <person name="Reinert K."/>
            <person name="Remington K.A."/>
            <person name="Clark A.G."/>
            <person name="Waterman M.S."/>
            <person name="Eichler E.E."/>
            <person name="Adams M.D."/>
            <person name="Hunkapiller M.W."/>
            <person name="Myers E.W."/>
            <person name="Venter J.C."/>
        </authorList>
    </citation>
    <scope>NUCLEOTIDE SEQUENCE [LARGE SCALE GENOMIC DNA]</scope>
</reference>
<reference key="7">
    <citation type="journal article" date="2004" name="Genome Res.">
        <title>The status, quality, and expansion of the NIH full-length cDNA project: the Mammalian Gene Collection (MGC).</title>
        <authorList>
            <consortium name="The MGC Project Team"/>
        </authorList>
    </citation>
    <scope>NUCLEOTIDE SEQUENCE [LARGE SCALE MRNA]</scope>
    <scope>VARIANT VAL-57</scope>
    <source>
        <tissue>Cervix</tissue>
        <tissue>Colon</tissue>
        <tissue>Kidney</tissue>
        <tissue>Muscle</tissue>
    </source>
</reference>
<reference key="8">
    <citation type="journal article" date="1998" name="EMBO J.">
        <title>A homologue of Drosophila aurora kinase is oncogenic and amplified in human colorectal cancers.</title>
        <authorList>
            <person name="Bischoff J.R."/>
            <person name="Anderson L."/>
            <person name="Zhu Y."/>
            <person name="Mossie K."/>
            <person name="Ng L."/>
            <person name="Souza B."/>
            <person name="Schryver B."/>
            <person name="Flanagan P."/>
            <person name="Clairvoyant F."/>
            <person name="Ginther C."/>
            <person name="Chan C.S."/>
            <person name="Novotny M."/>
            <person name="Slamon D.J."/>
            <person name="Plowman G.D."/>
        </authorList>
    </citation>
    <scope>INDUCTION</scope>
    <scope>SUBCELLULAR LOCATION</scope>
</reference>
<reference key="9">
    <citation type="journal article" date="2000" name="Oncogene">
        <title>Degradation of human Aurora2 protein kinase by the anaphase-promoting complex-ubiquitin-proteasome pathway.</title>
        <authorList>
            <person name="Honda K."/>
            <person name="Mihara H."/>
            <person name="Kato Y."/>
            <person name="Yamaguchi A."/>
            <person name="Tanaka H."/>
            <person name="Yasuda H."/>
            <person name="Furukawa K."/>
            <person name="Urano T."/>
        </authorList>
    </citation>
    <scope>UBIQUITINATION</scope>
    <scope>PROTEASOMAL DEGRADATION</scope>
    <scope>MUTAGENESIS OF ARG-205</scope>
</reference>
<reference key="10">
    <citation type="journal article" date="2000" name="Oncogene">
        <title>The mitotic serine/threonine kinase Aurora2/AIK is regulated by phosphorylation and degradation.</title>
        <authorList>
            <person name="Walter A.O."/>
            <person name="Seghezzi W."/>
            <person name="Korver W."/>
            <person name="Sheung J."/>
            <person name="Lees E."/>
        </authorList>
    </citation>
    <scope>FUNCTION</scope>
    <scope>PHOSPHORYLATION AT THR-288</scope>
    <scope>MUTAGENESIS OF THR-288</scope>
    <scope>UBIQUITINATION</scope>
    <scope>ACTIVITY REGULATION</scope>
</reference>
<reference key="11">
    <citation type="journal article" date="2001" name="J. Biol. Chem.">
        <title>Interaction and feedback regulation between STK15/BTAK/Aurora-A kinase and protein phosphatase 1 through mitotic cell division cycle.</title>
        <authorList>
            <person name="Katayama H."/>
            <person name="Zhou H."/>
            <person name="Li Q."/>
            <person name="Tatsuka M."/>
            <person name="Sen S."/>
        </authorList>
    </citation>
    <scope>FUNCTION</scope>
    <scope>INTERACTION WITH PPP1CA; PPP1CB AND PPP1CC</scope>
    <scope>MUTAGENESIS OF PHE-165 AND PHE-346</scope>
    <scope>PHOSPHORYLATION</scope>
</reference>
<reference key="12">
    <citation type="journal article" date="2002" name="Cell Struct. Funct.">
        <title>Molecular dynamics of Aurora-A kinase in living mitotic cells simultaneously visualized with histone H3 and nuclear membrane protein importinalpha.</title>
        <authorList>
            <person name="Sugimoto K."/>
            <person name="Urano T."/>
            <person name="Zushi H."/>
            <person name="Inoue K."/>
            <person name="Tasaka H."/>
            <person name="Tachibana M."/>
            <person name="Dotsu M."/>
        </authorList>
    </citation>
    <scope>SUBCELLULAR LOCATION</scope>
</reference>
<reference key="13">
    <citation type="journal article" date="2002" name="Genes Cells">
        <title>Roles of aurora-A kinase in mitotic entry and G2 checkpoint in mammalian cells.</title>
        <authorList>
            <person name="Marumoto T."/>
            <person name="Hirota T."/>
            <person name="Morisaki T."/>
            <person name="Kunitoku N."/>
            <person name="Zhang D."/>
            <person name="Ichikawa Y."/>
            <person name="Sasayama T."/>
            <person name="Kuninaka S."/>
            <person name="Mimori T."/>
            <person name="Tamaki N."/>
            <person name="Kimura M."/>
            <person name="Okano Y."/>
            <person name="Saya H."/>
        </authorList>
    </citation>
    <scope>FUNCTION</scope>
    <scope>INDUCTION</scope>
    <scope>PHOSPHORYLATION</scope>
    <scope>ACTIVITY REGULATION</scope>
</reference>
<reference key="14">
    <citation type="journal article" date="2002" name="J. Biol. Chem.">
        <title>Cell-cycle-dependent regulation of human aurora A transcription is mediated by periodic repression of E4TF1.</title>
        <authorList>
            <person name="Tanaka M."/>
            <person name="Ueda A."/>
            <person name="Kanamori H."/>
            <person name="Ideguchi H."/>
            <person name="Yang J."/>
            <person name="Kitajima S."/>
            <person name="Ishigatsubo Y."/>
        </authorList>
    </citation>
    <scope>INDUCTION</scope>
</reference>
<reference key="15">
    <citation type="journal article" date="2003" name="Cell">
        <title>Aurora-A and an interacting activator, the LIM protein Ajuba, are required for mitotic commitment in human cells.</title>
        <authorList>
            <person name="Hirota T."/>
            <person name="Kunitoku N."/>
            <person name="Sasayama T."/>
            <person name="Marumoto T."/>
            <person name="Zhang D."/>
            <person name="Nitta M."/>
            <person name="Hatakeyama K."/>
            <person name="Saya H."/>
        </authorList>
    </citation>
    <scope>FUNCTION</scope>
    <scope>SUBCELLULAR LOCATION</scope>
    <scope>PHOSPHORYLATION AT THR-288</scope>
</reference>
<reference key="16">
    <citation type="journal article" date="2003" name="J. Biol. Chem.">
        <title>Aurora-A kinase maintains the fidelity of early and late mitotic events in HeLa cells.</title>
        <authorList>
            <person name="Marumoto T."/>
            <person name="Honda S."/>
            <person name="Hara T."/>
            <person name="Nitta M."/>
            <person name="Hirota T."/>
            <person name="Kohmura E."/>
            <person name="Saya H."/>
        </authorList>
    </citation>
    <scope>FUNCTION</scope>
</reference>
<reference key="17">
    <citation type="journal article" date="2003" name="Oncogene">
        <title>TACC1-chTOG-Aurora A protein complex in breast cancer.</title>
        <authorList>
            <person name="Conte N."/>
            <person name="Delaval B."/>
            <person name="Ginestier C."/>
            <person name="Ferrand A."/>
            <person name="Isnardon D."/>
            <person name="Larroque C."/>
            <person name="Prigent C."/>
            <person name="Seraphin B."/>
            <person name="Jacquemier J."/>
            <person name="Birnbaum D."/>
        </authorList>
    </citation>
    <scope>INTERACTION WITH TACC1</scope>
</reference>
<reference key="18">
    <citation type="journal article" date="2004" name="Genes Cells">
        <title>The centrosomal protein Lats2 is a phosphorylation target of Aurora-A kinase.</title>
        <authorList>
            <person name="Toji S."/>
            <person name="Yabuta N."/>
            <person name="Hosomi T."/>
            <person name="Nishihara S."/>
            <person name="Kobayashi T."/>
            <person name="Suzuki S."/>
            <person name="Tamai K."/>
            <person name="Nojima H."/>
        </authorList>
    </citation>
    <scope>FUNCTION</scope>
</reference>
<reference key="19">
    <citation type="journal article" date="2004" name="J. Biol. Chem.">
        <title>BRCA1 phosphorylation by Aurora-A in the regulation of G2 to M transition.</title>
        <authorList>
            <person name="Ouchi M."/>
            <person name="Fujiuchi N."/>
            <person name="Sasai K."/>
            <person name="Katayama H."/>
            <person name="Minamishima Y.A."/>
            <person name="Ongusaha P.P."/>
            <person name="Deng C."/>
            <person name="Sen S."/>
            <person name="Lee S.W."/>
            <person name="Ouchi T."/>
        </authorList>
    </citation>
    <scope>RETRACTED PAPER</scope>
</reference>
<reference key="20">
    <citation type="journal article" date="2015" name="J. Biol. Chem.">
        <authorList>
            <person name="Ouchi M."/>
            <person name="Fujiuchi N."/>
            <person name="Sasai K."/>
            <person name="Katayama H."/>
            <person name="Minamishima Y.A."/>
            <person name="Ongusaha P.P."/>
            <person name="Deng C."/>
            <person name="Sen S."/>
            <person name="Lee S.W."/>
            <person name="Ouchi T."/>
        </authorList>
    </citation>
    <scope>RETRACTION NOTICE OF PUBMED:14990569</scope>
</reference>
<reference key="21">
    <citation type="journal article" date="2004" name="J. Cell Sci.">
        <title>Phosphorylation of CDC25B by Aurora-A at the centrosome contributes to the G2-M transition.</title>
        <authorList>
            <person name="Dutertre S."/>
            <person name="Cazales M."/>
            <person name="Quaranta M."/>
            <person name="Froment C."/>
            <person name="Trabut V."/>
            <person name="Dozier C."/>
            <person name="Mirey G."/>
            <person name="Bouche J.P."/>
            <person name="Theis-Febvre N."/>
            <person name="Schmitt E."/>
            <person name="Monsarrat B."/>
            <person name="Prigent C."/>
            <person name="Ducommun B."/>
        </authorList>
    </citation>
    <scope>FUNCTION</scope>
</reference>
<reference key="22">
    <citation type="journal article" date="2004" name="Nat. Genet.">
        <title>Phosphorylation by aurora kinase A induces Mdm2-mediated destabilization and inhibition of p53.</title>
        <authorList>
            <person name="Katayama H."/>
            <person name="Sasai K."/>
            <person name="Kawai H."/>
            <person name="Yuan Z.M."/>
            <person name="Bondaruk J."/>
            <person name="Suzuki F."/>
            <person name="Fujii S."/>
            <person name="Arlinghaus R.B."/>
            <person name="Czerniak B.A."/>
            <person name="Sen S."/>
        </authorList>
    </citation>
    <scope>FUNCTION</scope>
    <scope>MUTAGENESIS OF LYS-162</scope>
    <scope>INTERACTION WITH TP53</scope>
</reference>
<reference key="23">
    <citation type="journal article" date="2005" name="Genes Cells">
        <title>Over-expression of Aurora-A targets cytoplasmic polyadenylation element binding protein and promotes mRNA polyadenylation of Cdk1 and cyclin B1.</title>
        <authorList>
            <person name="Sasayama T."/>
            <person name="Marumoto T."/>
            <person name="Kunitoku N."/>
            <person name="Zhang D."/>
            <person name="Tamaki N."/>
            <person name="Kohmura E."/>
            <person name="Saya H."/>
            <person name="Hirota T."/>
        </authorList>
    </citation>
    <scope>INTERACTION WITH CPEB1</scope>
</reference>
<reference key="24">
    <citation type="journal article" date="2005" name="Mol. Cell">
        <title>The GIT-associated kinase PAK targets to the centrosome and regulates Aurora-A.</title>
        <authorList>
            <person name="Zhao Z.S."/>
            <person name="Lim J.P."/>
            <person name="Ng Y.W."/>
            <person name="Lim L."/>
            <person name="Manser E."/>
        </authorList>
    </citation>
    <scope>PHOSPHORYLATION AT THR-288 AND SER-342</scope>
</reference>
<reference key="25">
    <citation type="journal article" date="2005" name="Mol. Cell. Biol.">
        <title>Phosphorylation and stabilization of HURP by Aurora-A: implication of HURP as a transforming target of Aurora-A.</title>
        <authorList>
            <person name="Yu C.T."/>
            <person name="Hsu J.M."/>
            <person name="Lee Y.C."/>
            <person name="Tsou A.P."/>
            <person name="Chou C.K."/>
            <person name="Huang C.Y."/>
        </authorList>
    </citation>
    <scope>INDUCTION</scope>
    <scope>FUNCTION</scope>
</reference>
<reference key="26">
    <citation type="journal article" date="2006" name="Dev. Cell">
        <title>Mitotic activation of the kinase Aurora-A requires its binding partner Bora.</title>
        <authorList>
            <person name="Hutterer A."/>
            <person name="Berdnik D."/>
            <person name="Wirtz-Peitz F."/>
            <person name="Zigman M."/>
            <person name="Schleiffer A."/>
            <person name="Knoblich J.A."/>
        </authorList>
    </citation>
    <scope>INTERACTION WITH BORA</scope>
</reference>
<reference key="27">
    <citation type="journal article" date="2007" name="Cancer Res.">
        <title>Aurora-A kinase regulates breast cancer associated gene 1 inhibition of centrosome-dependent microtubule nucleation.</title>
        <authorList>
            <person name="Sankaran S."/>
            <person name="Crone D.E."/>
            <person name="Palazzo R.E."/>
            <person name="Parvin J.D."/>
        </authorList>
    </citation>
    <scope>FUNCTION</scope>
</reference>
<reference key="28">
    <citation type="journal article" date="2007" name="Cell">
        <title>HEF1-dependent Aurora A activation induces disassembly of the primary cilium.</title>
        <authorList>
            <person name="Pugacheva E.N."/>
            <person name="Jablonski S.A."/>
            <person name="Hartman T.R."/>
            <person name="Henske E.P."/>
            <person name="Golemis E.A."/>
        </authorList>
    </citation>
    <scope>FUNCTION</scope>
    <scope>INTERACTION WITH HDAC6</scope>
    <scope>SUBCELLULAR LOCATION</scope>
    <scope>MUTAGENESIS OF ASP-274 AND THR-288</scope>
</reference>
<reference key="29">
    <citation type="journal article" date="2007" name="Dev. Cell">
        <title>GEF-H1 modulates localized RhoA activation during cytokinesis under the control of mitotic kinases.</title>
        <authorList>
            <person name="Birkenfeld J."/>
            <person name="Nalbant P."/>
            <person name="Bohl B.P."/>
            <person name="Pertz O."/>
            <person name="Hahn K.M."/>
            <person name="Bokoch G.M."/>
        </authorList>
    </citation>
    <scope>INTERACTION WITH ARHGEF2</scope>
</reference>
<reference key="30">
    <citation type="journal article" date="2007" name="Mol. Biol. Cell">
        <title>Functional interaction of Aurora-A and PP2A during mitosis.</title>
        <authorList>
            <person name="Horn V."/>
            <person name="Thelu J."/>
            <person name="Garcia A."/>
            <person name="Albiges-Rizo C."/>
            <person name="Block M.R."/>
            <person name="Viallet J."/>
        </authorList>
    </citation>
    <scope>SUBCELLULAR LOCATION</scope>
    <scope>INTERACTION WITH PPP2CA</scope>
    <scope>PHOSPHORYLATION AT SER-51</scope>
</reference>
<reference key="31">
    <citation type="journal article" date="2007" name="PLoS ONE">
        <title>Interphase nucleo-cytoplasmic shuttling and localization of SIRT2 during mitosis.</title>
        <authorList>
            <person name="North B.J."/>
            <person name="Verdin E."/>
        </authorList>
    </citation>
    <scope>INTERACTION WITH SIRT2</scope>
    <scope>SUBCELLULAR LOCATION</scope>
</reference>
<reference key="32">
    <citation type="journal article" date="2007" name="Proc. Natl. Acad. Sci. U.S.A.">
        <title>Antitumor activity of MLN8054, an orally active small-molecule inhibitor of Aurora A kinase.</title>
        <authorList>
            <person name="Manfredi M.G."/>
            <person name="Ecsedy J.A."/>
            <person name="Meetze K.A."/>
            <person name="Balani S.K."/>
            <person name="Burenkova O."/>
            <person name="Chen W."/>
            <person name="Galvin K.M."/>
            <person name="Hoar K.M."/>
            <person name="Huck J.J."/>
            <person name="LeRoy P.J."/>
            <person name="Ray E.T."/>
            <person name="Sells T.B."/>
            <person name="Stringer B."/>
            <person name="Stroud S.G."/>
            <person name="Vos T.J."/>
            <person name="Weatherhead G.S."/>
            <person name="Wysong D.R."/>
            <person name="Zhang M."/>
            <person name="Bolen J.B."/>
            <person name="Claiborne C.F."/>
        </authorList>
    </citation>
    <scope>FUNCTION</scope>
    <scope>ACTIVITY REGULATION</scope>
</reference>
<reference key="33">
    <citation type="journal article" date="2008" name="Mol. Cell">
        <title>Kinase-selective enrichment enables quantitative phosphoproteomics of the kinome across the cell cycle.</title>
        <authorList>
            <person name="Daub H."/>
            <person name="Olsen J.V."/>
            <person name="Bairlein M."/>
            <person name="Gnad F."/>
            <person name="Oppermann F.S."/>
            <person name="Korner R."/>
            <person name="Greff Z."/>
            <person name="Keri G."/>
            <person name="Stemmann O."/>
            <person name="Mann M."/>
        </authorList>
    </citation>
    <scope>PHOSPHORYLATION [LARGE SCALE ANALYSIS] AT SER-41</scope>
    <scope>IDENTIFICATION BY MASS SPECTROMETRY [LARGE SCALE ANALYSIS]</scope>
    <source>
        <tissue>Cervix carcinoma</tissue>
    </source>
</reference>
<reference key="34">
    <citation type="journal article" date="2008" name="Nature">
        <title>Polo-like kinase-1 is activated by aurora A to promote checkpoint recovery.</title>
        <authorList>
            <person name="Macurek L."/>
            <person name="Lindqvist A."/>
            <person name="Lim D."/>
            <person name="Lampson M.A."/>
            <person name="Klompmaker R."/>
            <person name="Freire R."/>
            <person name="Clouin C."/>
            <person name="Taylor S.S."/>
            <person name="Yaffe M.B."/>
            <person name="Medema R.H."/>
        </authorList>
    </citation>
    <scope>FUNCTION</scope>
</reference>
<reference key="35">
    <citation type="journal article" date="2009" name="J. Biol. Chem.">
        <title>Phosphorylation of the par polarity complex protein Par3 at serine 962 is mediated by aurora A and regulates its function in neuronal polarity.</title>
        <authorList>
            <person name="Khazaei M.R."/>
            <person name="Puschel A.W."/>
        </authorList>
    </citation>
    <scope>FUNCTION</scope>
    <scope>AUTOPHOSPHORYLATION</scope>
    <scope>INTERACTION WITH PARD3</scope>
</reference>
<reference key="36">
    <citation type="journal article" date="2009" name="J. Cell Sci.">
        <title>Plk1 and Aurora A regulate the depolymerase activity and the cellular localization of Kif2a.</title>
        <authorList>
            <person name="Jang C.Y."/>
            <person name="Coppinger J.A."/>
            <person name="Seki A."/>
            <person name="Yates J.R. III"/>
            <person name="Fang G."/>
        </authorList>
    </citation>
    <scope>FUNCTION</scope>
    <scope>SUBCELLULAR LOCATION</scope>
    <scope>INTERACTION WITH KIF2A</scope>
</reference>
<reference key="37">
    <citation type="journal article" date="2009" name="Nat. Cell Biol.">
        <title>An essential role of the aPKC-Aurora A-NDEL1 pathway in neurite elongation by modulation of microtubule dynamics.</title>
        <authorList>
            <person name="Mori D."/>
            <person name="Yamada M."/>
            <person name="Mimori-Kiyosue Y."/>
            <person name="Shirai Y."/>
            <person name="Suzuki A."/>
            <person name="Ohno S."/>
            <person name="Saya H."/>
            <person name="Wynshaw-Boris A."/>
            <person name="Hirotsune S."/>
        </authorList>
    </citation>
    <scope>FUNCTION</scope>
    <scope>INTERACTION WITH TPX2</scope>
    <scope>PHOSPHORYLATION AT THR-287 AND THR-288</scope>
    <scope>MUTAGENESIS OF THR-287</scope>
</reference>
<reference key="38">
    <citation type="journal article" date="2009" name="Proc. Natl. Acad. Sci. U.S.A.">
        <title>A single amino acid change converts Aurora-A into Aurora-B-like kinase in terms of partner specificity and cellular function.</title>
        <authorList>
            <person name="Fu J."/>
            <person name="Bian M."/>
            <person name="Liu J."/>
            <person name="Jiang Q."/>
            <person name="Zhang C."/>
        </authorList>
    </citation>
    <scope>INTERACTION WITH TPX2</scope>
    <scope>MUTAGENESIS OF GLY-198</scope>
    <scope>SUBCELLULAR LOCATION</scope>
</reference>
<reference key="39">
    <citation type="journal article" date="2010" name="Dev. Cell">
        <title>Pitchfork regulates primary cilia disassembly and left-right asymmetry.</title>
        <authorList>
            <person name="Kinzel D."/>
            <person name="Boldt K."/>
            <person name="Davis E.E."/>
            <person name="Burtscher I."/>
            <person name="Trumbach D."/>
            <person name="Diplas B."/>
            <person name="Attie-Bitach T."/>
            <person name="Wurst W."/>
            <person name="Katsanis N."/>
            <person name="Ueffing M."/>
            <person name="Lickert H."/>
        </authorList>
    </citation>
    <scope>FUNCTION</scope>
    <scope>INTERACTION WITH CIMAP3</scope>
    <scope>ACTIVATION BY CIMAP3</scope>
</reference>
<reference key="40">
    <citation type="journal article" date="2010" name="Int. J. Oncol.">
        <title>Functional characterization of AIBp, a novel Aurora-A binding protein in centrosome structure and spindle formation.</title>
        <authorList>
            <person name="Lieu A.S."/>
            <person name="Cheng T.S."/>
            <person name="Chou C.H."/>
            <person name="Wu C.H."/>
            <person name="Hsu C.Y."/>
            <person name="Huang C.Y."/>
            <person name="Chang L.K."/>
            <person name="Loh J.K."/>
            <person name="Chang C.S."/>
            <person name="Hsu C.M."/>
            <person name="Howng S.L."/>
            <person name="Hong Y.R."/>
        </authorList>
    </citation>
    <scope>IDENTIFICATION IN A COMPLEX WITH AUNIP AND NIN</scope>
</reference>
<reference key="41">
    <citation type="journal article" date="2010" name="J. Biol. Chem.">
        <title>Solution structure of human growth arrest and DNA damage 45alpha (Gadd45alpha) and its interactions with proliferating cell nuclear antigen (PCNA) and Aurora A kinase.</title>
        <authorList>
            <person name="Sanchez R."/>
            <person name="Pantoja-Uceda D."/>
            <person name="Prieto J."/>
            <person name="Diercks T."/>
            <person name="Marcaida M.J."/>
            <person name="Montoya G."/>
            <person name="Campos-Olivas R."/>
            <person name="Blanco F.J."/>
        </authorList>
    </citation>
    <scope>INTERACTION WITH GADD45A</scope>
</reference>
<reference key="42">
    <citation type="journal article" date="2011" name="BMC Syst. Biol.">
        <title>Initial characterization of the human central proteome.</title>
        <authorList>
            <person name="Burkard T.R."/>
            <person name="Planyavsky M."/>
            <person name="Kaupe I."/>
            <person name="Breitwieser F.P."/>
            <person name="Buerckstuemmer T."/>
            <person name="Bennett K.L."/>
            <person name="Superti-Furga G."/>
            <person name="Colinge J."/>
        </authorList>
    </citation>
    <scope>IDENTIFICATION BY MASS SPECTROMETRY [LARGE SCALE ANALYSIS]</scope>
</reference>
<reference key="43">
    <citation type="journal article" date="2011" name="Int. J. Oncol.">
        <title>PAR, a protein involved in the cell cycle, is functionally related to chromosomal passenger proteins.</title>
        <authorList>
            <person name="Platica M."/>
            <person name="Ionescu A."/>
            <person name="Ivan E."/>
            <person name="Holland J.F."/>
            <person name="Mandeli J."/>
            <person name="Platica O."/>
        </authorList>
    </citation>
    <scope>SUBCELLULAR LOCATION</scope>
    <scope>INTERACTION WITH JTB</scope>
</reference>
<reference key="44">
    <citation type="journal article" date="2003" name="Nat. Rev. Mol. Cell Biol.">
        <title>The cellular geography of aurora kinases.</title>
        <authorList>
            <person name="Carmena M."/>
            <person name="Earnshaw W.C."/>
        </authorList>
    </citation>
    <scope>REVIEW ON FUNCTION</scope>
</reference>
<reference key="45">
    <citation type="journal article" date="2009" name="Environ. Mol. Mutagen.">
        <title>Aurora A, centrosome structure, and the centrosome cycle.</title>
        <authorList>
            <person name="Lukasiewicz K.B."/>
            <person name="Lingle W.L."/>
        </authorList>
    </citation>
    <scope>REVIEW ON FUNCTION</scope>
</reference>
<reference key="46">
    <citation type="journal article" date="2011" name="Cancer Cell">
        <title>SIRT2 maintains genome integrity and suppresses tumorigenesis through regulating APC/C activity.</title>
        <authorList>
            <person name="Kim H.S."/>
            <person name="Vassilopoulos A."/>
            <person name="Wang R.H."/>
            <person name="Lahusen T."/>
            <person name="Xiao Z."/>
            <person name="Xu X."/>
            <person name="Li C."/>
            <person name="Veenstra T.D."/>
            <person name="Li B."/>
            <person name="Yu H."/>
            <person name="Ji J."/>
            <person name="Wang X.W."/>
            <person name="Park S.H."/>
            <person name="Cha Y.I."/>
            <person name="Gius D."/>
            <person name="Deng C.X."/>
        </authorList>
    </citation>
    <scope>INTERACTION WITH SIRT2</scope>
    <scope>SUBCELLULAR LOCATION</scope>
</reference>
<reference key="47">
    <citation type="journal article" date="2011" name="J. Cell Sci.">
        <title>The nuclear scaffold protein SAF-A is required for kinetochore-microtubule attachment and contributes to the targeting of Aurora-A to mitotic spindles.</title>
        <authorList>
            <person name="Ma N."/>
            <person name="Matsunaga S."/>
            <person name="Morimoto A."/>
            <person name="Sakashita G."/>
            <person name="Urano T."/>
            <person name="Uchiyama S."/>
            <person name="Fukui K."/>
        </authorList>
    </citation>
    <scope>INTERACTION WITH HNRNPU</scope>
</reference>
<reference key="48">
    <citation type="journal article" date="2012" name="Biol. Open">
        <title>The CUL3-KLHL18 ligase regulates mitotic entry and ubiquitylates Aurora-A.</title>
        <authorList>
            <person name="Moghe S."/>
            <person name="Jiang F."/>
            <person name="Miura Y."/>
            <person name="Cerny R.L."/>
            <person name="Tsai M.Y."/>
            <person name="Furukawa M."/>
        </authorList>
    </citation>
    <scope>INTERACTION WITH KLHL18 AND CUL3</scope>
    <scope>UBIQUITINATION</scope>
    <scope>SUBCELLULAR LOCATION</scope>
</reference>
<reference key="49">
    <citation type="journal article" date="2012" name="J. Biol. Chem.">
        <title>Furry protein promotes Aurora A-mediated polo-like kinase 1 activation.</title>
        <authorList>
            <person name="Ikeda M."/>
            <person name="Chiba S."/>
            <person name="Ohashi K."/>
            <person name="Mizuno K."/>
        </authorList>
    </citation>
    <scope>INTERACTION WITH FRY</scope>
</reference>
<reference key="50">
    <citation type="journal article" date="2015" name="Mol. Biol. Cell">
        <title>CENP-32 is required to maintain centrosomal dominance in bipolar spindle assembly.</title>
        <authorList>
            <person name="Ohta S."/>
            <person name="Wood L."/>
            <person name="Toramoto I."/>
            <person name="Yagyu K."/>
            <person name="Fukagawa T."/>
            <person name="Earnshaw W.C."/>
        </authorList>
    </citation>
    <scope>SUBCELLULAR LOCATION</scope>
</reference>
<reference key="51">
    <citation type="journal article" date="2015" name="Mol. Cell. Biol.">
        <title>Phosphorylation of SAF-A/hnRNP-U serine 59 by polo-like kinase 1 is required for mitosis.</title>
        <authorList>
            <person name="Douglas P."/>
            <person name="Ye R."/>
            <person name="Morrice N."/>
            <person name="Britton S."/>
            <person name="Trinkle-Mulcahy L."/>
            <person name="Lees-Miller S.P."/>
        </authorList>
    </citation>
    <scope>INTERACTION WITH HNRNPU</scope>
</reference>
<reference key="52">
    <citation type="journal article" date="2016" name="Cell Cycle">
        <title>Aurora-A regulates MCRS1 function during mitosis.</title>
        <authorList>
            <person name="Meunier S."/>
            <person name="Timon K."/>
            <person name="Vernos I."/>
        </authorList>
    </citation>
    <scope>FUNCTION</scope>
    <scope>CATALYTIC ACTIVITY</scope>
</reference>
<reference key="53">
    <citation type="journal article" date="2016" name="J. Cell Sci.">
        <title>Aurora A kinase regulates proper spindle positioning in C. elegans and in human cells.</title>
        <authorList>
            <person name="Kotak S."/>
            <person name="Afshar K."/>
            <person name="Busso C."/>
            <person name="Goenczy P."/>
        </authorList>
    </citation>
    <scope>FUNCTION</scope>
</reference>
<reference key="54">
    <citation type="journal article" date="2017" name="Nat. Struct. Mol. Biol.">
        <title>Site-specific mapping of the human SUMO proteome reveals co-modification with phosphorylation.</title>
        <authorList>
            <person name="Hendriks I.A."/>
            <person name="Lyon D."/>
            <person name="Young C."/>
            <person name="Jensen L.J."/>
            <person name="Vertegaal A.C."/>
            <person name="Nielsen M.L."/>
        </authorList>
    </citation>
    <scope>SUMOYLATION [LARGE SCALE ANALYSIS] AT LYS-258</scope>
    <scope>IDENTIFICATION BY MASS SPECTROMETRY [LARGE SCALE ANALYSIS]</scope>
</reference>
<reference key="55">
    <citation type="journal article" date="2017" name="Oncogenesis">
        <title>Aurora kinase A regulates Survivin stability through targeting FBXL7 in gastric cancer drug resistance and prognosis.</title>
        <authorList>
            <person name="Kamran M."/>
            <person name="Long Z.J."/>
            <person name="Xu D."/>
            <person name="Lv S.S."/>
            <person name="Liu B."/>
            <person name="Wang C.L."/>
            <person name="Xu J."/>
            <person name="Lam E.W."/>
            <person name="Liu Q."/>
        </authorList>
    </citation>
    <scope>FUNCTION</scope>
    <scope>CATALYTIC ACTIVITY</scope>
    <scope>ACTIVITY REGULATION</scope>
    <scope>INTERACTION WITH FOXP1</scope>
</reference>
<reference key="56">
    <citation type="journal article" date="2019" name="RNA">
        <title>Human nuclear RNAi-defective 2 (NRDE2) is an essential RNA splicing factor.</title>
        <authorList>
            <person name="Jiao A.L."/>
            <person name="Perales R."/>
            <person name="Umbreit N.T."/>
            <person name="Haswell J.R."/>
            <person name="Piper M.E."/>
            <person name="Adams B.D."/>
            <person name="Pellman D."/>
            <person name="Kennedy S."/>
            <person name="Slack F.J."/>
        </authorList>
    </citation>
    <scope>SUBCELLULAR LOCATION</scope>
</reference>
<reference key="57">
    <citation type="journal article" date="2002" name="J. Biol. Chem.">
        <title>Crystal structure of aurora-2, an oncogenic serine/threonine kinase.</title>
        <authorList>
            <person name="Cheetham G.M."/>
            <person name="Knegtel R.M."/>
            <person name="Coll J.T."/>
            <person name="Renwick S.B."/>
            <person name="Swenson L."/>
            <person name="Weber P."/>
            <person name="Lippke J.A."/>
            <person name="Austen D.A."/>
        </authorList>
    </citation>
    <scope>X-RAY CRYSTALLOGRAPHY (2.9 ANGSTROMS) OF 107-403 IN COMPLEX WITH ADENOSINE</scope>
    <scope>CATALYTIC ACTIVITY</scope>
</reference>
<reference key="58">
    <citation type="journal article" date="2002" name="Structure">
        <title>Structures of the cancer-related Aurora-A, FAK, and EphA2 protein kinases from nanovolume crystallography.</title>
        <authorList>
            <person name="Nowakowski J."/>
            <person name="Cronin C.N."/>
            <person name="McRee D.E."/>
            <person name="Knuth M.W."/>
            <person name="Nelson C.G."/>
            <person name="Pavletich N.P."/>
            <person name="Rogers J."/>
            <person name="Sang B.C."/>
            <person name="Scheibe D.N."/>
            <person name="Swanson R.V."/>
            <person name="Thompson D.A."/>
        </authorList>
    </citation>
    <scope>X-RAY CRYSTALLOGRAPHY (1.9 ANGSTROMS) OF 125-391 IN COMPLEX WITH ADP</scope>
</reference>
<reference key="59">
    <citation type="journal article" date="2003" name="Mol. Cell">
        <title>Structural basis of Aurora-A activation by TPX2 at the mitotic spindle.</title>
        <authorList>
            <person name="Bayliss R."/>
            <person name="Sardon T."/>
            <person name="Vernos I."/>
            <person name="Conti E."/>
        </authorList>
    </citation>
    <scope>X-RAY CRYSTALLOGRAPHY (2.5 ANGSTROMS) OF 122-403 IN COMPLEX WITH TPX2</scope>
    <scope>MUTAGENESIS OF ASP-274</scope>
    <scope>ACTIVE SITE</scope>
    <scope>PHOSPHORYLATION AT THR-287 AND THR-288</scope>
    <scope>REGION ACTIVATION SEGMENT</scope>
</reference>
<reference key="60">
    <citation type="journal article" date="2006" name="Bioorg. Med. Chem. Lett.">
        <title>SAR and inhibitor complex structure determination of a novel class of potent and specific Aurora kinase inhibitors.</title>
        <authorList>
            <person name="Heron N.M."/>
            <person name="Anderson M."/>
            <person name="Blowers D.P."/>
            <person name="Breed J."/>
            <person name="Eden J.M."/>
            <person name="Green S."/>
            <person name="Hill G.B."/>
            <person name="Johnson T."/>
            <person name="Jung F.H."/>
            <person name="McMiken H.H."/>
            <person name="Mortlock A.A."/>
            <person name="Pannifer A.D."/>
            <person name="Pauptit R.A."/>
            <person name="Pink J."/>
            <person name="Roberts N.J."/>
            <person name="Rowsell S."/>
        </authorList>
    </citation>
    <scope>X-RAY CRYSTALLOGRAPHY (2.1 ANGSTROMS) OF 123-401 IN COMPLEXES WITH ADPNP AND 5-AMINOPYRIMIDINYL QUINAZOLINE INHIBITOR</scope>
    <scope>CATALYTIC ACTIVITY</scope>
</reference>
<reference key="61">
    <citation type="journal article" date="2006" name="J. Med. Chem.">
        <title>1,4,5,6-tetrahydropyrrolo[3,4-c]pyrazoles: identification of a potent aurora kinase inhibitor with a favorable antitumor kinase inhibition profile.</title>
        <authorList>
            <person name="Fancelli D."/>
            <person name="Moll J."/>
            <person name="Varasi M."/>
            <person name="Bravo R."/>
            <person name="Artico R."/>
            <person name="Berta D."/>
            <person name="Bindi S."/>
            <person name="Cameron A."/>
            <person name="Candiani I."/>
            <person name="Cappella P."/>
            <person name="Carpinelli P."/>
            <person name="Croci W."/>
            <person name="Forte B."/>
            <person name="Giorgini M.L."/>
            <person name="Klapwijk J."/>
            <person name="Marsiglio A."/>
            <person name="Pesenti E."/>
            <person name="Rocchetti M."/>
            <person name="Roletto F."/>
            <person name="Severino D."/>
            <person name="Soncini C."/>
            <person name="Storici P."/>
            <person name="Tonani R."/>
            <person name="Zugnoni P."/>
            <person name="Vianello P."/>
        </authorList>
    </citation>
    <scope>X-RAY CRYSTALLOGRAPHY (2.0 ANGSTROMS) OF 100-403 IN COMPLEXES WITH SYNTHETIC INHIBITORS</scope>
    <scope>FUNCTION</scope>
</reference>
<reference key="62">
    <citation type="journal article" date="2008" name="Protein Sci.">
        <title>Modulation of kinase-inhibitor interactions by auxiliary protein binding: crystallography studies on Aurora A interactions with VX-680 and with TPX2.</title>
        <authorList>
            <person name="Zhao B."/>
            <person name="Smallwood A."/>
            <person name="Yang J."/>
            <person name="Koretke K."/>
            <person name="Nurse K."/>
            <person name="Calamari A."/>
            <person name="Kirkpatrick R.B."/>
            <person name="Lai Z."/>
        </authorList>
    </citation>
    <scope>X-RAY CRYSTALLOGRAPHY (2.3 ANGSTROMS) OF 125-391 IN COMPLEX WITH VX-680 AND TPX2</scope>
    <scope>PHOSPHORYLATION AT THR-288</scope>
    <scope>IDENTIFICATION BY MASS SPECTROMETRY</scope>
    <scope>SUBUNIT</scope>
</reference>
<reference key="63">
    <citation type="journal article" date="2009" name="J. Biol. Chem.">
        <title>A cancer-associated aurora A mutant is mislocalized and misregulated due to loss of interaction with TPX2.</title>
        <authorList>
            <person name="Bibby R.A."/>
            <person name="Tang C."/>
            <person name="Faisal A."/>
            <person name="Drosopoulos K."/>
            <person name="Lubbe S."/>
            <person name="Houlston R."/>
            <person name="Bayliss R."/>
            <person name="Linardopoulos S."/>
        </authorList>
    </citation>
    <scope>X-RAY CRYSTALLOGRAPHY (2.5 ANGSTROMS) OF 127-388 IN COMPLEX WITH ADP</scope>
    <scope>CHARACTERIZATION OF VARIANTS ARG-155 AND MET-174</scope>
    <scope>INTERACTION WITH TPX2</scope>
</reference>
<reference key="64">
    <citation type="journal article" date="2009" name="J. Med. Chem.">
        <title>Structure-based drug design of novel Aurora kinase A inhibitors: structural basis for potency and specificity.</title>
        <authorList>
            <person name="Coumar M.S."/>
            <person name="Leou J.S."/>
            <person name="Shukla P."/>
            <person name="Wu J.S."/>
            <person name="Dixit A.K."/>
            <person name="Lin W.H."/>
            <person name="Chang C.Y."/>
            <person name="Lien T.W."/>
            <person name="Tan U.K."/>
            <person name="Chen C.H."/>
            <person name="Hsu J.T."/>
            <person name="Chao Y.S."/>
            <person name="Wu S.Y."/>
            <person name="Hsieh H.P."/>
        </authorList>
    </citation>
    <scope>X-RAY CRYSTALLOGRAPHY (1.9 ANGSTROMS) OF 123-401 IN COMPLEX WITH SYNTHETIC INHIBITOR</scope>
    <scope>CATALYTIC ACTIVITY</scope>
</reference>
<reference key="65">
    <citation type="journal article" date="2009" name="J. Med. Chem.">
        <title>A class of 2,4-bisanilinopyrimidine Aurora A inhibitors with unusually high selectivity against Aurora B.</title>
        <authorList>
            <person name="Aliagas-Martin I."/>
            <person name="Burdick D."/>
            <person name="Corson L."/>
            <person name="Dotson J."/>
            <person name="Drummond J."/>
            <person name="Fields C."/>
            <person name="Huang O.W."/>
            <person name="Hunsaker T."/>
            <person name="Kleinheinz T."/>
            <person name="Krueger E."/>
            <person name="Liang J."/>
            <person name="Moffat J."/>
            <person name="Phillips G."/>
            <person name="Pulk R."/>
            <person name="Rawson T.E."/>
            <person name="Ultsch M."/>
            <person name="Walker L."/>
            <person name="Wiesmann C."/>
            <person name="Zhang B."/>
            <person name="Zhu B.Y."/>
            <person name="Cochran A.G."/>
        </authorList>
    </citation>
    <scope>X-RAY CRYSTALLOGRAPHY (2.2 ANGSTROMS) OF 125-391 IN COMPLEX WITH SYNTHETIC INHIBITOR</scope>
    <scope>CATALYTIC ACTIVITY</scope>
</reference>
<reference key="66">
    <citation type="journal article" date="2016" name="Proc. Natl. Acad. Sci. U.S.A.">
        <title>Structural basis of N-Myc binding by Aurora-A and its destabilization by kinase inhibitors.</title>
        <authorList>
            <person name="Richards M.W."/>
            <person name="Burgess S.G."/>
            <person name="Poon E."/>
            <person name="Carstensen A."/>
            <person name="Eilers M."/>
            <person name="Chesler L."/>
            <person name="Bayliss R."/>
        </authorList>
    </citation>
    <scope>X-RAY CRYSTALLOGRAPHY (1.72 ANGSTROMS) OF 122-403 OF MUTANTS ALA-290 AND ALA-393 IN COMPLEX WITH ADP</scope>
    <scope>INTERACTION WITH MYCN AND TPX2</scope>
    <scope>MUTAGENESIS OF CYS-290; TYR-334; GLN-335 AND CYS-393</scope>
    <scope>CATALYTIC ACTIVITY</scope>
</reference>
<reference key="67">
    <citation type="journal article" date="2005" name="Cancer Res.">
        <title>Two functional coding single nucleotide polymorphisms in STK15 (Aurora-A) coordinately increase esophageal cancer risk.</title>
        <authorList>
            <person name="Kimura M.T."/>
            <person name="Mori T."/>
            <person name="Conroy J."/>
            <person name="Nowak N.J."/>
            <person name="Satomi S."/>
            <person name="Tamai K."/>
            <person name="Nagase H."/>
        </authorList>
    </citation>
    <scope>VARIANTS ILE-31 AND VAL-57</scope>
    <scope>CHARACTERIZATION OF VARIANT VAL-57</scope>
</reference>
<reference key="68">
    <citation type="journal article" date="2005" name="Yi Chuan Xue Bao">
        <title>Linkage disequilibrium and haplotype analysis of two single nucleotide polymorphisms in STK15 in Chinese.</title>
        <authorList>
            <person name="Chen L."/>
            <person name="Ao X."/>
            <person name="Ren Q."/>
            <person name="Wang Z.N."/>
            <person name="Lu C."/>
            <person name="Xu Y."/>
            <person name="Jiang L."/>
            <person name="Luo Y."/>
            <person name="Xu H.M."/>
            <person name="Zhang X."/>
        </authorList>
    </citation>
    <scope>VARIANTS ILE-31 AND VAL-57</scope>
</reference>
<reference key="69">
    <citation type="journal article" date="2007" name="Cancer Lett.">
        <title>Aurora kinases A and B and familial breast cancer risk.</title>
        <authorList>
            <person name="Tchatchou S."/>
            <person name="Wirtenberger M."/>
            <person name="Hemminki K."/>
            <person name="Sutter C."/>
            <person name="Meindl A."/>
            <person name="Wappenschmidt B."/>
            <person name="Kiechle M."/>
            <person name="Bugert P."/>
            <person name="Schmutzler R.K."/>
            <person name="Bartram C.R."/>
            <person name="Burwinkel B."/>
        </authorList>
    </citation>
    <scope>VARIANT ILE-31</scope>
</reference>
<reference key="70">
    <citation type="journal article" date="2007" name="Nature">
        <title>Patterns of somatic mutation in human cancer genomes.</title>
        <authorList>
            <person name="Greenman C."/>
            <person name="Stephens P."/>
            <person name="Smith R."/>
            <person name="Dalgliesh G.L."/>
            <person name="Hunter C."/>
            <person name="Bignell G."/>
            <person name="Davies H."/>
            <person name="Teague J."/>
            <person name="Butler A."/>
            <person name="Stevens C."/>
            <person name="Edkins S."/>
            <person name="O'Meara S."/>
            <person name="Vastrik I."/>
            <person name="Schmidt E.E."/>
            <person name="Avis T."/>
            <person name="Barthorpe S."/>
            <person name="Bhamra G."/>
            <person name="Buck G."/>
            <person name="Choudhury B."/>
            <person name="Clements J."/>
            <person name="Cole J."/>
            <person name="Dicks E."/>
            <person name="Forbes S."/>
            <person name="Gray K."/>
            <person name="Halliday K."/>
            <person name="Harrison R."/>
            <person name="Hills K."/>
            <person name="Hinton J."/>
            <person name="Jenkinson A."/>
            <person name="Jones D."/>
            <person name="Menzies A."/>
            <person name="Mironenko T."/>
            <person name="Perry J."/>
            <person name="Raine K."/>
            <person name="Richardson D."/>
            <person name="Shepherd R."/>
            <person name="Small A."/>
            <person name="Tofts C."/>
            <person name="Varian J."/>
            <person name="Webb T."/>
            <person name="West S."/>
            <person name="Widaa S."/>
            <person name="Yates A."/>
            <person name="Cahill D.P."/>
            <person name="Louis D.N."/>
            <person name="Goldstraw P."/>
            <person name="Nicholson A.G."/>
            <person name="Brasseur F."/>
            <person name="Looijenga L."/>
            <person name="Weber B.L."/>
            <person name="Chiew Y.-E."/>
            <person name="DeFazio A."/>
            <person name="Greaves M.F."/>
            <person name="Green A.R."/>
            <person name="Campbell P."/>
            <person name="Birney E."/>
            <person name="Easton D.F."/>
            <person name="Chenevix-Trench G."/>
            <person name="Tan M.-H."/>
            <person name="Khoo S.K."/>
            <person name="Teh B.T."/>
            <person name="Yuen S.T."/>
            <person name="Leung S.Y."/>
            <person name="Wooster R."/>
            <person name="Futreal P.A."/>
            <person name="Stratton M.R."/>
        </authorList>
    </citation>
    <scope>VARIANTS [LARGE SCALE ANALYSIS] ILE-31; LEU-50; VAL-57; ARG-155; MET-174 AND VAL-373</scope>
</reference>
<reference key="71">
    <citation type="journal article" date="2014" name="Mol. Cancer Res.">
        <title>NEDD9 regulates actin dynamics through cortactin deacetylation in an AURKA/HDAC6-dependent manner.</title>
        <authorList>
            <person name="Kozyreva V.K."/>
            <person name="McLaughlin S.L."/>
            <person name="Livengood R.H."/>
            <person name="Calkins R.A."/>
            <person name="Kelley L.C."/>
            <person name="Rajulapati A."/>
            <person name="Ice R.J."/>
            <person name="Smolkin M.B."/>
            <person name="Weed S.A."/>
            <person name="Pugacheva E.N."/>
        </authorList>
    </citation>
    <scope>IDENTIFICATION IN A COMPLEX WITH NEDD9 AND CTTN</scope>
</reference>
<reference key="72">
    <citation type="journal article" date="2015" name="Mol. Biol. Cell">
        <title>The nucleoporin ALADIN regulates Aurora A localization to ensure robust mitotic spindle formation.</title>
        <authorList>
            <person name="Carvalhal S."/>
            <person name="Ribeiro S.A."/>
            <person name="Arocena M."/>
            <person name="Kasciukovic T."/>
            <person name="Temme A."/>
            <person name="Koehler K."/>
            <person name="Huebner A."/>
            <person name="Griffis E.R."/>
        </authorList>
    </citation>
    <scope>FUNCTION</scope>
    <scope>INTERACTION WITH AAAS</scope>
    <scope>SUBCELLULAR LOCATION</scope>
    <scope>PHOSPHORYLATION AT THR-288</scope>
</reference>
<evidence type="ECO:0000250" key="1">
    <source>
        <dbReference type="UniProtKB" id="A0A8I3S724"/>
    </source>
</evidence>
<evidence type="ECO:0000250" key="2">
    <source>
        <dbReference type="UniProtKB" id="F1PNY0"/>
    </source>
</evidence>
<evidence type="ECO:0000250" key="3">
    <source>
        <dbReference type="UniProtKB" id="P59241"/>
    </source>
</evidence>
<evidence type="ECO:0000250" key="4">
    <source>
        <dbReference type="UniProtKB" id="P97477"/>
    </source>
</evidence>
<evidence type="ECO:0000255" key="5">
    <source>
        <dbReference type="PROSITE-ProRule" id="PRU00159"/>
    </source>
</evidence>
<evidence type="ECO:0000255" key="6">
    <source>
        <dbReference type="PROSITE-ProRule" id="PRU10027"/>
    </source>
</evidence>
<evidence type="ECO:0000256" key="7">
    <source>
        <dbReference type="SAM" id="MobiDB-lite"/>
    </source>
</evidence>
<evidence type="ECO:0000269" key="8">
    <source>
    </source>
</evidence>
<evidence type="ECO:0000269" key="9">
    <source>
    </source>
</evidence>
<evidence type="ECO:0000269" key="10">
    <source>
    </source>
</evidence>
<evidence type="ECO:0000269" key="11">
    <source>
    </source>
</evidence>
<evidence type="ECO:0000269" key="12">
    <source>
    </source>
</evidence>
<evidence type="ECO:0000269" key="13">
    <source>
    </source>
</evidence>
<evidence type="ECO:0000269" key="14">
    <source>
    </source>
</evidence>
<evidence type="ECO:0000269" key="15">
    <source>
    </source>
</evidence>
<evidence type="ECO:0000269" key="16">
    <source>
    </source>
</evidence>
<evidence type="ECO:0000269" key="17">
    <source>
    </source>
</evidence>
<evidence type="ECO:0000269" key="18">
    <source>
    </source>
</evidence>
<evidence type="ECO:0000269" key="19">
    <source>
    </source>
</evidence>
<evidence type="ECO:0000269" key="20">
    <source>
    </source>
</evidence>
<evidence type="ECO:0000269" key="21">
    <source>
    </source>
</evidence>
<evidence type="ECO:0000269" key="22">
    <source>
    </source>
</evidence>
<evidence type="ECO:0000269" key="23">
    <source>
    </source>
</evidence>
<evidence type="ECO:0000269" key="24">
    <source>
    </source>
</evidence>
<evidence type="ECO:0000269" key="25">
    <source>
    </source>
</evidence>
<evidence type="ECO:0000269" key="26">
    <source>
    </source>
</evidence>
<evidence type="ECO:0000269" key="27">
    <source>
    </source>
</evidence>
<evidence type="ECO:0000269" key="28">
    <source>
    </source>
</evidence>
<evidence type="ECO:0000269" key="29">
    <source>
    </source>
</evidence>
<evidence type="ECO:0000269" key="30">
    <source>
    </source>
</evidence>
<evidence type="ECO:0000269" key="31">
    <source>
    </source>
</evidence>
<evidence type="ECO:0000269" key="32">
    <source>
    </source>
</evidence>
<evidence type="ECO:0000269" key="33">
    <source>
    </source>
</evidence>
<evidence type="ECO:0000269" key="34">
    <source>
    </source>
</evidence>
<evidence type="ECO:0000269" key="35">
    <source>
    </source>
</evidence>
<evidence type="ECO:0000269" key="36">
    <source>
    </source>
</evidence>
<evidence type="ECO:0000269" key="37">
    <source>
    </source>
</evidence>
<evidence type="ECO:0000269" key="38">
    <source>
    </source>
</evidence>
<evidence type="ECO:0000269" key="39">
    <source>
    </source>
</evidence>
<evidence type="ECO:0000269" key="40">
    <source>
    </source>
</evidence>
<evidence type="ECO:0000269" key="41">
    <source>
    </source>
</evidence>
<evidence type="ECO:0000269" key="42">
    <source>
    </source>
</evidence>
<evidence type="ECO:0000269" key="43">
    <source>
    </source>
</evidence>
<evidence type="ECO:0000269" key="44">
    <source>
    </source>
</evidence>
<evidence type="ECO:0000269" key="45">
    <source>
    </source>
</evidence>
<evidence type="ECO:0000269" key="46">
    <source>
    </source>
</evidence>
<evidence type="ECO:0000269" key="47">
    <source>
    </source>
</evidence>
<evidence type="ECO:0000269" key="48">
    <source>
    </source>
</evidence>
<evidence type="ECO:0000269" key="49">
    <source>
    </source>
</evidence>
<evidence type="ECO:0000269" key="50">
    <source>
    </source>
</evidence>
<evidence type="ECO:0000269" key="51">
    <source>
    </source>
</evidence>
<evidence type="ECO:0000269" key="52">
    <source>
    </source>
</evidence>
<evidence type="ECO:0000269" key="53">
    <source>
    </source>
</evidence>
<evidence type="ECO:0000269" key="54">
    <source>
    </source>
</evidence>
<evidence type="ECO:0000269" key="55">
    <source>
    </source>
</evidence>
<evidence type="ECO:0000269" key="56">
    <source>
    </source>
</evidence>
<evidence type="ECO:0000269" key="57">
    <source>
    </source>
</evidence>
<evidence type="ECO:0000269" key="58">
    <source>
    </source>
</evidence>
<evidence type="ECO:0000269" key="59">
    <source>
    </source>
</evidence>
<evidence type="ECO:0000269" key="60">
    <source>
    </source>
</evidence>
<evidence type="ECO:0000269" key="61">
    <source>
    </source>
</evidence>
<evidence type="ECO:0000269" key="62">
    <source>
    </source>
</evidence>
<evidence type="ECO:0000269" key="63">
    <source>
    </source>
</evidence>
<evidence type="ECO:0000269" key="64">
    <source>
    </source>
</evidence>
<evidence type="ECO:0000269" key="65">
    <source>
    </source>
</evidence>
<evidence type="ECO:0000269" key="66">
    <source>
    </source>
</evidence>
<evidence type="ECO:0000269" key="67">
    <source>
    </source>
</evidence>
<evidence type="ECO:0000269" key="68">
    <source>
    </source>
</evidence>
<evidence type="ECO:0000269" key="69">
    <source>
    </source>
</evidence>
<evidence type="ECO:0000303" key="70">
    <source>
    </source>
</evidence>
<evidence type="ECO:0000303" key="71">
    <source>
    </source>
</evidence>
<evidence type="ECO:0000303" key="72">
    <source>
    </source>
</evidence>
<evidence type="ECO:0000303" key="73">
    <source>
    </source>
</evidence>
<evidence type="ECO:0000303" key="74">
    <source>
    </source>
</evidence>
<evidence type="ECO:0000303" key="75">
    <source>
    </source>
</evidence>
<evidence type="ECO:0000303" key="76">
    <source>
    </source>
</evidence>
<evidence type="ECO:0000305" key="77"/>
<evidence type="ECO:0000305" key="78">
    <source>
    </source>
</evidence>
<evidence type="ECO:0000305" key="79">
    <source>
    </source>
</evidence>
<evidence type="ECO:0000305" key="80">
    <source>
    </source>
</evidence>
<evidence type="ECO:0000312" key="81">
    <source>
        <dbReference type="HGNC" id="HGNC:11393"/>
    </source>
</evidence>
<evidence type="ECO:0007744" key="82">
    <source>
        <dbReference type="PDB" id="5G1X"/>
    </source>
</evidence>
<evidence type="ECO:0007744" key="83">
    <source>
    </source>
</evidence>
<evidence type="ECO:0007744" key="84">
    <source>
    </source>
</evidence>
<evidence type="ECO:0007829" key="85">
    <source>
        <dbReference type="PDB" id="2J50"/>
    </source>
</evidence>
<evidence type="ECO:0007829" key="86">
    <source>
        <dbReference type="PDB" id="3UO6"/>
    </source>
</evidence>
<evidence type="ECO:0007829" key="87">
    <source>
        <dbReference type="PDB" id="3UOL"/>
    </source>
</evidence>
<evidence type="ECO:0007829" key="88">
    <source>
        <dbReference type="PDB" id="5L8J"/>
    </source>
</evidence>
<evidence type="ECO:0007829" key="89">
    <source>
        <dbReference type="PDB" id="5L8L"/>
    </source>
</evidence>
<evidence type="ECO:0007829" key="90">
    <source>
        <dbReference type="PDB" id="5ORL"/>
    </source>
</evidence>
<evidence type="ECO:0007829" key="91">
    <source>
        <dbReference type="PDB" id="6C2T"/>
    </source>
</evidence>
<evidence type="ECO:0007829" key="92">
    <source>
        <dbReference type="PDB" id="6VPM"/>
    </source>
</evidence>
<evidence type="ECO:0007829" key="93">
    <source>
        <dbReference type="PDB" id="6XKA"/>
    </source>
</evidence>
<evidence type="ECO:0007829" key="94">
    <source>
        <dbReference type="PDB" id="8JF4"/>
    </source>
</evidence>
<keyword id="KW-0002">3D-structure</keyword>
<keyword id="KW-0067">ATP-binding</keyword>
<keyword id="KW-0131">Cell cycle</keyword>
<keyword id="KW-0132">Cell division</keyword>
<keyword id="KW-1003">Cell membrane</keyword>
<keyword id="KW-0966">Cell projection</keyword>
<keyword id="KW-0969">Cilium</keyword>
<keyword id="KW-0970">Cilium biogenesis/degradation</keyword>
<keyword id="KW-0963">Cytoplasm</keyword>
<keyword id="KW-0206">Cytoskeleton</keyword>
<keyword id="KW-1017">Isopeptide bond</keyword>
<keyword id="KW-0418">Kinase</keyword>
<keyword id="KW-0472">Membrane</keyword>
<keyword id="KW-0493">Microtubule</keyword>
<keyword id="KW-0498">Mitosis</keyword>
<keyword id="KW-0547">Nucleotide-binding</keyword>
<keyword id="KW-0597">Phosphoprotein</keyword>
<keyword id="KW-1267">Proteomics identification</keyword>
<keyword id="KW-0656">Proto-oncogene</keyword>
<keyword id="KW-1185">Reference proteome</keyword>
<keyword id="KW-0723">Serine/threonine-protein kinase</keyword>
<keyword id="KW-0808">Transferase</keyword>
<keyword id="KW-0832">Ubl conjugation</keyword>
<feature type="chain" id="PRO_0000086692" description="Aurora kinase A">
    <location>
        <begin position="1"/>
        <end position="403"/>
    </location>
</feature>
<feature type="domain" description="Protein kinase" evidence="5">
    <location>
        <begin position="133"/>
        <end position="383"/>
    </location>
</feature>
<feature type="region of interest" description="Disordered" evidence="7">
    <location>
        <begin position="1"/>
        <end position="125"/>
    </location>
</feature>
<feature type="region of interest" description="Activation segment" evidence="18">
    <location>
        <begin position="280"/>
        <end position="293"/>
    </location>
</feature>
<feature type="compositionally biased region" description="Polar residues" evidence="7">
    <location>
        <begin position="27"/>
        <end position="83"/>
    </location>
</feature>
<feature type="compositionally biased region" description="Polar residues" evidence="7">
    <location>
        <begin position="91"/>
        <end position="101"/>
    </location>
</feature>
<feature type="compositionally biased region" description="Basic and acidic residues" evidence="7">
    <location>
        <begin position="114"/>
        <end position="125"/>
    </location>
</feature>
<feature type="active site" description="Proton acceptor" evidence="5 6 18">
    <location>
        <position position="256"/>
    </location>
</feature>
<feature type="binding site" evidence="63 82">
    <location>
        <position position="143"/>
    </location>
    <ligand>
        <name>ATP</name>
        <dbReference type="ChEBI" id="CHEBI:30616"/>
    </ligand>
</feature>
<feature type="binding site" evidence="63 82">
    <location>
        <position position="162"/>
    </location>
    <ligand>
        <name>ATP</name>
        <dbReference type="ChEBI" id="CHEBI:30616"/>
    </ligand>
</feature>
<feature type="binding site" evidence="63 82">
    <location>
        <begin position="211"/>
        <end position="213"/>
    </location>
    <ligand>
        <name>ATP</name>
        <dbReference type="ChEBI" id="CHEBI:30616"/>
    </ligand>
</feature>
<feature type="binding site" evidence="63 82">
    <location>
        <begin position="260"/>
        <end position="261"/>
    </location>
    <ligand>
        <name>ATP</name>
        <dbReference type="ChEBI" id="CHEBI:30616"/>
    </ligand>
</feature>
<feature type="binding site" evidence="63 82">
    <location>
        <position position="274"/>
    </location>
    <ligand>
        <name>ATP</name>
        <dbReference type="ChEBI" id="CHEBI:30616"/>
    </ligand>
</feature>
<feature type="modified residue" description="Phosphoserine" evidence="83">
    <location>
        <position position="41"/>
    </location>
</feature>
<feature type="modified residue" description="Phosphoserine" evidence="33">
    <location>
        <position position="51"/>
    </location>
</feature>
<feature type="modified residue" description="Phosphothreonine" evidence="18 46">
    <location>
        <position position="287"/>
    </location>
</feature>
<feature type="modified residue" description="Phosphothreonine" evidence="9 16 18 28 41 46 60">
    <location>
        <position position="288"/>
    </location>
</feature>
<feature type="modified residue" description="Phosphoserine; by PKA and PAK" evidence="28">
    <location>
        <position position="342"/>
    </location>
</feature>
<feature type="cross-link" description="Glycyl lysine isopeptide (Lys-Gly) (interchain with G-Cter in SUMO2)" evidence="84">
    <location>
        <position position="258"/>
    </location>
</feature>
<feature type="sequence variant" id="VAR_030840" description="In dbSNP:rs6069717.">
    <original>G</original>
    <variation>R</variation>
    <location>
        <position position="11"/>
    </location>
</feature>
<feature type="sequence variant" id="VAR_030841" description="In dbSNP:rs2273535." evidence="24 27 30 34 69">
    <original>F</original>
    <variation>I</variation>
    <location>
        <position position="31"/>
    </location>
</feature>
<feature type="sequence variant" id="VAR_041127" description="In dbSNP:rs34572020." evidence="34">
    <original>P</original>
    <variation>L</variation>
    <location>
        <position position="50"/>
    </location>
</feature>
<feature type="sequence variant" id="VAR_030842" description="Increased kinase activity; dbSNP:rs1047972." evidence="23 24 27 34 66 67 69">
    <original>I</original>
    <variation>V</variation>
    <location>
        <position position="57"/>
    </location>
</feature>
<feature type="sequence variant" id="VAR_061745" description="In dbSNP:rs2230743.">
    <original>S</original>
    <variation>L</variation>
    <location>
        <position position="104"/>
    </location>
</feature>
<feature type="sequence variant" id="VAR_041128" description="In a colorectal adenocarcinoma sample; somatic mutation; reduces interaction with TPX2." evidence="34 47">
    <original>S</original>
    <variation>R</variation>
    <location>
        <position position="155"/>
    </location>
</feature>
<feature type="sequence variant" id="VAR_041129" description="In a metastatic melanoma sample; somatic mutation; constitutively enhanced kinase activity." evidence="34 47">
    <original>V</original>
    <variation>M</variation>
    <location>
        <position position="174"/>
    </location>
</feature>
<feature type="sequence variant" id="VAR_041130" description="In dbSNP:rs33923703." evidence="34">
    <original>M</original>
    <variation>V</variation>
    <location>
        <position position="373"/>
    </location>
</feature>
<feature type="mutagenesis site" description="Loss of kinase activity." evidence="20">
    <original>K</original>
    <variation>R</variation>
    <location>
        <position position="162"/>
    </location>
</feature>
<feature type="mutagenesis site" description="Decreases the interaction with phosphatase type 1 isoforms." evidence="10">
    <original>F</original>
    <variation>A</variation>
    <location>
        <position position="165"/>
    </location>
</feature>
<feature type="mutagenesis site" description="Reduces interaction with TPX2. Reduces kinase activity tenfold. Promotes interaction with the AURKB binding partners INCENP and BIRC5 that are normally not bound by AURKA." evidence="44">
    <original>G</original>
    <variation>N</variation>
    <location>
        <position position="198"/>
    </location>
</feature>
<feature type="mutagenesis site" description="Reduces ubiquitination and proteasomal degradation." evidence="8">
    <original>R</original>
    <variation>A</variation>
    <location>
        <position position="205"/>
    </location>
</feature>
<feature type="mutagenesis site" description="Abolishes cilia disassembly and kinase activity." evidence="18 37">
    <original>D</original>
    <variation>N</variation>
    <location>
        <position position="274"/>
    </location>
</feature>
<feature type="mutagenesis site" description="No direct effect on catalytic activity." evidence="46">
    <original>T</original>
    <variation>A</variation>
    <location>
        <position position="287"/>
    </location>
</feature>
<feature type="mutagenesis site" description="Enhances interaction with TPX2." evidence="46">
    <original>T</original>
    <variation>E</variation>
    <location>
        <position position="287"/>
    </location>
</feature>
<feature type="mutagenesis site" description="Reduces cilia disassembly and kinase activity." evidence="37">
    <original>T</original>
    <variation>A</variation>
    <location>
        <position position="288"/>
    </location>
</feature>
<feature type="mutagenesis site" description="Mimics phosphorylation state and increases kinase activity." evidence="9">
    <original>T</original>
    <variation>D</variation>
    <location>
        <position position="288"/>
    </location>
</feature>
<feature type="mutagenesis site" description="Enhances stability; when associated with A-393." evidence="63">
    <original>C</original>
    <variation>A</variation>
    <location>
        <position position="290"/>
    </location>
</feature>
<feature type="mutagenesis site" description="Reduces binding to MYCN." evidence="63">
    <original>Y</original>
    <variation>A</variation>
    <location>
        <position position="334"/>
    </location>
</feature>
<feature type="mutagenesis site" description="Reduces binding to MYCN." evidence="63">
    <original>Q</original>
    <variation>A</variation>
    <location>
        <position position="335"/>
    </location>
</feature>
<feature type="mutagenesis site" description="Decreases the interaction with phosphatase type 1 isoforms." evidence="10">
    <original>F</original>
    <variation>A</variation>
    <location>
        <position position="346"/>
    </location>
</feature>
<feature type="mutagenesis site" description="Enhances stability; when associated with A-290." evidence="63">
    <original>C</original>
    <variation>A</variation>
    <location>
        <position position="393"/>
    </location>
</feature>
<feature type="helix" evidence="92">
    <location>
        <begin position="130"/>
        <end position="132"/>
    </location>
</feature>
<feature type="strand" evidence="92">
    <location>
        <begin position="133"/>
        <end position="141"/>
    </location>
</feature>
<feature type="strand" evidence="92">
    <location>
        <begin position="143"/>
        <end position="152"/>
    </location>
</feature>
<feature type="turn" evidence="92">
    <location>
        <begin position="153"/>
        <end position="156"/>
    </location>
</feature>
<feature type="strand" evidence="92">
    <location>
        <begin position="157"/>
        <end position="165"/>
    </location>
</feature>
<feature type="helix" evidence="92">
    <location>
        <begin position="166"/>
        <end position="172"/>
    </location>
</feature>
<feature type="helix" evidence="92">
    <location>
        <begin position="175"/>
        <end position="185"/>
    </location>
</feature>
<feature type="strand" evidence="86">
    <location>
        <begin position="191"/>
        <end position="193"/>
    </location>
</feature>
<feature type="strand" evidence="92">
    <location>
        <begin position="196"/>
        <end position="201"/>
    </location>
</feature>
<feature type="strand" evidence="92">
    <location>
        <begin position="203"/>
        <end position="210"/>
    </location>
</feature>
<feature type="strand" evidence="85">
    <location>
        <begin position="214"/>
        <end position="217"/>
    </location>
</feature>
<feature type="helix" evidence="92">
    <location>
        <begin position="218"/>
        <end position="225"/>
    </location>
</feature>
<feature type="helix" evidence="92">
    <location>
        <begin position="230"/>
        <end position="249"/>
    </location>
</feature>
<feature type="strand" evidence="93">
    <location>
        <begin position="252"/>
        <end position="254"/>
    </location>
</feature>
<feature type="helix" evidence="92">
    <location>
        <begin position="259"/>
        <end position="261"/>
    </location>
</feature>
<feature type="strand" evidence="92">
    <location>
        <begin position="262"/>
        <end position="264"/>
    </location>
</feature>
<feature type="strand" evidence="87">
    <location>
        <begin position="266"/>
        <end position="268"/>
    </location>
</feature>
<feature type="strand" evidence="92">
    <location>
        <begin position="270"/>
        <end position="272"/>
    </location>
</feature>
<feature type="helix" evidence="90">
    <location>
        <begin position="275"/>
        <end position="277"/>
    </location>
</feature>
<feature type="strand" evidence="89">
    <location>
        <begin position="280"/>
        <end position="283"/>
    </location>
</feature>
<feature type="helix" evidence="92">
    <location>
        <begin position="288"/>
        <end position="291"/>
    </location>
</feature>
<feature type="helix" evidence="88">
    <location>
        <begin position="293"/>
        <end position="295"/>
    </location>
</feature>
<feature type="helix" evidence="92">
    <location>
        <begin position="298"/>
        <end position="302"/>
    </location>
</feature>
<feature type="helix" evidence="92">
    <location>
        <begin position="304"/>
        <end position="306"/>
    </location>
</feature>
<feature type="helix" evidence="91">
    <location>
        <begin position="307"/>
        <end position="309"/>
    </location>
</feature>
<feature type="helix" evidence="92">
    <location>
        <begin position="310"/>
        <end position="324"/>
    </location>
</feature>
<feature type="helix" evidence="92">
    <location>
        <begin position="334"/>
        <end position="342"/>
    </location>
</feature>
<feature type="strand" evidence="94">
    <location>
        <begin position="350"/>
        <end position="352"/>
    </location>
</feature>
<feature type="helix" evidence="92">
    <location>
        <begin position="354"/>
        <end position="363"/>
    </location>
</feature>
<feature type="helix" evidence="92">
    <location>
        <begin position="368"/>
        <end position="370"/>
    </location>
</feature>
<feature type="helix" evidence="92">
    <location>
        <begin position="374"/>
        <end position="378"/>
    </location>
</feature>
<feature type="helix" evidence="92">
    <location>
        <begin position="381"/>
        <end position="386"/>
    </location>
</feature>
<comment type="function">
    <text evidence="1 9 10 13 16 17 20 21 22 26 32 35 37 39 40 43 46 48 51 60 61 62 64">Mitotic serine/threonine kinase that contributes to the regulation of cell cycle progression (PubMed:11039908, PubMed:12390251, PubMed:17125279, PubMed:17360485, PubMed:18615013, PubMed:26246606). Associates with the centrosome and the spindle microtubules during mitosis and plays a critical role in various mitotic events including the establishment of mitotic spindle, centrosome duplication, centrosome separation as well as maturation, chromosomal alignment, spindle assembly checkpoint, and cytokinesis (PubMed:14523000, PubMed:26246606). Required for normal spindle positioning during mitosis and for the localization of NUMA1 and DCTN1 to the cell cortex during metaphase (PubMed:27335426). Required for initial activation of CDK1 at centrosomes (PubMed:13678582, PubMed:15128871). Phosphorylates numerous target proteins, including ARHGEF2, BORA, BRCA1, CDC25B, DLGP5, HDAC6, KIF2A, LATS2, NDEL1, PARD3, PPP1R2, PLK1, RASSF1, TACC3, p53/TP53 and TPX2 (PubMed:11551964, PubMed:14702041, PubMed:15128871, PubMed:15147269, PubMed:15987997, PubMed:17604723, PubMed:18056443, PubMed:18615013). Phosphorylates MCRS1 which is required for MCRS1-mediated kinetochore fiber assembly and mitotic progression (PubMed:27192185). Regulates KIF2A tubulin depolymerase activity (PubMed:19351716). Important for microtubule formation and/or stabilization (PubMed:18056443). Required for normal axon formation (PubMed:19812038). Plays a role in microtubule remodeling during neurite extension (PubMed:19668197). Also acts as a key regulatory component of the p53/TP53 pathway, and particularly the checkpoint-response pathways critical for oncogenic transformation of cells, by phosphorylating and destabilizing p53/TP53 (PubMed:14702041). Phosphorylates its own inhibitors, the protein phosphatase type 1 (PP1) isoforms, to inhibit their activity (PubMed:11551964). Inhibits cilia outgrowth (By similarity). Required for cilia disassembly via phosphorylation of HDAC6 and subsequent deacetylation of alpha-tubulin (PubMed:17604723, PubMed:20643351). Regulates protein levels of the anti-apoptosis protein BIRC5 by suppressing the expression of the SCF(FBXL7) E3 ubiquitin-protein ligase substrate adapter FBXL7 through the phosphorylation of the transcription factor FOXP1 (PubMed:28218735).</text>
</comment>
<comment type="catalytic activity">
    <reaction evidence="12 29 42 45 61 63 64">
        <text>L-seryl-[protein] + ATP = O-phospho-L-seryl-[protein] + ADP + H(+)</text>
        <dbReference type="Rhea" id="RHEA:17989"/>
        <dbReference type="Rhea" id="RHEA-COMP:9863"/>
        <dbReference type="Rhea" id="RHEA-COMP:11604"/>
        <dbReference type="ChEBI" id="CHEBI:15378"/>
        <dbReference type="ChEBI" id="CHEBI:29999"/>
        <dbReference type="ChEBI" id="CHEBI:30616"/>
        <dbReference type="ChEBI" id="CHEBI:83421"/>
        <dbReference type="ChEBI" id="CHEBI:456216"/>
        <dbReference type="EC" id="2.7.11.1"/>
    </reaction>
</comment>
<comment type="catalytic activity">
    <reaction evidence="12 29 42 45 63 64">
        <text>L-threonyl-[protein] + ATP = O-phospho-L-threonyl-[protein] + ADP + H(+)</text>
        <dbReference type="Rhea" id="RHEA:46608"/>
        <dbReference type="Rhea" id="RHEA-COMP:11060"/>
        <dbReference type="Rhea" id="RHEA-COMP:11605"/>
        <dbReference type="ChEBI" id="CHEBI:15378"/>
        <dbReference type="ChEBI" id="CHEBI:30013"/>
        <dbReference type="ChEBI" id="CHEBI:30616"/>
        <dbReference type="ChEBI" id="CHEBI:61977"/>
        <dbReference type="ChEBI" id="CHEBI:456216"/>
        <dbReference type="EC" id="2.7.11.1"/>
    </reaction>
</comment>
<comment type="activity regulation">
    <text evidence="9 13 35 64">Activation of CDK1, appears to be an upstream event of AURKA activation. Phosphatase inhibitor-2 (PPP1R2) and TPX2 act also as activators. Inactivated by the G2 checkpoint. Inhibited by GADD45A and p53/TP53, and through dephosphorylation by protein phosphatase type 1 (PP1). MLN8054 is also a potent and selective inhibitor. Activated during the early phase of cilia disassembly in the presence of CIMAP3. Inhibited by the small molecule inhibitor VX-680 (PubMed:28218735).</text>
</comment>
<comment type="subunit">
    <text evidence="4 10 12 14 18 19 20 25 31 33 36 37 38 41 42 43 44 45 46 47 48 49 50 51 52 53 54 55 56 57 59 60 63 64">Part of a complex composed of NEDD9, AURKA and CTTN; within the complex NEDD9 acts as a scaffold protein and is required for complex formation (PubMed:24574519). Identified in a complex with AUNIP and NIN (PubMed:20596670). Interacts with FBXL7 (By similarity). Interacts with CPEB1, JTB, TACC1, TPX2, PPP2CA, as well as with the protein phosphatase type 1 (PP1) isoforms PPP1CA, PPP1CB and PPP1CC (PubMed:11551964, PubMed:14580337, PubMed:14603251, PubMed:15966895, PubMed:17229885, PubMed:18662907, PubMed:19357306, PubMed:19668197, PubMed:19801554, PubMed:21225229, PubMed:27837025). Also interacts with its substrates ARHGEF2, BORA, KIF2A, PARD3, and p53/TP53 (PubMed:14702041, PubMed:16890155, PubMed:17488622, PubMed:19351716, PubMed:19812038). Interaction with BORA promotes phosphorylation of PLK1 (By similarity). Interacts with CIMAP3 (PubMed:20643351). Interacts with GADD45A, competing with its oligomerization (PubMed:20460379). Interacts (via C-terminus) with AUNIP (via C-terminus) (PubMed:20596670). Interacts with FRY; this interaction facilitates AURKA-mediated PLK1 phosphorylation (PubMed:22753416). Interacts with SIRT2 (PubMed:17726514, PubMed:22014574). Interacts with MYCN; interaction is phospho-independent and triggers AURKA activation; AURKA competes with FBXW7 for binding to unphosphorylated MYCN but not for binding to phosphorylated MYCN (PubMed:27837025). Interacts with HNRNPU (PubMed:21242313, PubMed:25986610). Interacts with AAAS (PubMed:26246606). Interacts with KLHL18 and CUL3 (PubMed:23213400). Interacts with FOXP1 (PubMed:28218735). Interacts with HDAC6; AURKA-mediated phosphorylation of HDAC6 promotes deacetylation of alpha-tubulin (PubMed:17604723).</text>
</comment>
<comment type="interaction">
    <interactant intactId="EBI-448680">
        <id>O14965</id>
    </interactant>
    <interactant intactId="EBI-448665">
        <id>Q9NWT8</id>
        <label>AURKAIP1</label>
    </interactant>
    <organismsDiffer>false</organismsDiffer>
    <experiments>2</experiments>
</comment>
<comment type="interaction">
    <interactant intactId="EBI-448680">
        <id>O14965</id>
    </interactant>
    <interactant intactId="EBI-518823">
        <id>O15392</id>
        <label>BIRC5</label>
    </interactant>
    <organismsDiffer>false</organismsDiffer>
    <experiments>2</experiments>
</comment>
<comment type="interaction">
    <interactant intactId="EBI-448680">
        <id>O14965</id>
    </interactant>
    <interactant intactId="EBI-719836">
        <id>Q6PGQ7</id>
        <label>BORA</label>
    </interactant>
    <organismsDiffer>false</organismsDiffer>
    <experiments>3</experiments>
</comment>
<comment type="interaction">
    <interactant intactId="EBI-448680">
        <id>O14965</id>
    </interactant>
    <interactant intactId="EBI-297353">
        <id>P00533</id>
        <label>EGFR</label>
    </interactant>
    <organismsDiffer>false</organismsDiffer>
    <experiments>4</experiments>
</comment>
<comment type="interaction">
    <interactant intactId="EBI-448680">
        <id>O14965</id>
    </interactant>
    <interactant intactId="EBI-73440">
        <id>P06730</id>
        <label>EIF4E</label>
    </interactant>
    <organismsDiffer>false</organismsDiffer>
    <experiments>2</experiments>
</comment>
<comment type="interaction">
    <interactant intactId="EBI-448680">
        <id>O14965</id>
    </interactant>
    <interactant intactId="EBI-304185">
        <id>P61978</id>
        <label>HNRNPK</label>
    </interactant>
    <organismsDiffer>false</organismsDiffer>
    <experiments>2</experiments>
</comment>
<comment type="interaction">
    <interactant intactId="EBI-448680">
        <id>O14965</id>
    </interactant>
    <interactant intactId="EBI-713456">
        <id>Q13123</id>
        <label>IK</label>
    </interactant>
    <organismsDiffer>false</organismsDiffer>
    <experiments>3</experiments>
</comment>
<comment type="interaction">
    <interactant intactId="EBI-448680">
        <id>O14965</id>
    </interactant>
    <interactant intactId="EBI-81266">
        <id>O14920</id>
        <label>IKBKB</label>
    </interactant>
    <organismsDiffer>false</organismsDiffer>
    <experiments>2</experiments>
</comment>
<comment type="interaction">
    <interactant intactId="EBI-448680">
        <id>O14965</id>
    </interactant>
    <interactant intactId="EBI-307907">
        <id>Q9NQS7</id>
        <label>INCENP</label>
    </interactant>
    <organismsDiffer>false</organismsDiffer>
    <experiments>2</experiments>
</comment>
<comment type="interaction">
    <interactant intactId="EBI-448680">
        <id>O14965</id>
    </interactant>
    <interactant intactId="EBI-15767972">
        <id>Q9NQS7-1</id>
        <label>INCENP</label>
    </interactant>
    <organismsDiffer>false</organismsDiffer>
    <experiments>2</experiments>
</comment>
<comment type="interaction">
    <interactant intactId="EBI-448680">
        <id>O14965</id>
    </interactant>
    <interactant intactId="EBI-878369">
        <id>P04198</id>
        <label>MYCN</label>
    </interactant>
    <organismsDiffer>false</organismsDiffer>
    <experiments>12</experiments>
</comment>
<comment type="interaction">
    <interactant intactId="EBI-448680">
        <id>O14965</id>
    </interactant>
    <interactant intactId="EBI-78579">
        <id>P06748</id>
        <label>NPM1</label>
    </interactant>
    <organismsDiffer>false</organismsDiffer>
    <experiments>3</experiments>
</comment>
<comment type="interaction">
    <interactant intactId="EBI-448680">
        <id>O14965</id>
    </interactant>
    <interactant intactId="EBI-476768">
        <id>P53350</id>
        <label>PLK1</label>
    </interactant>
    <organismsDiffer>false</organismsDiffer>
    <experiments>4</experiments>
</comment>
<comment type="interaction">
    <interactant intactId="EBI-448680">
        <id>O14965</id>
    </interactant>
    <interactant intactId="EBI-2682990">
        <id>P23468</id>
        <label>PTPRD</label>
    </interactant>
    <organismsDiffer>false</organismsDiffer>
    <experiments>2</experiments>
</comment>
<comment type="interaction">
    <interactant intactId="EBI-448680">
        <id>O14965</id>
    </interactant>
    <interactant intactId="EBI-413317">
        <id>Q96R06</id>
        <label>SPAG5</label>
    </interactant>
    <organismsDiffer>false</organismsDiffer>
    <experiments>3</experiments>
</comment>
<comment type="interaction">
    <interactant intactId="EBI-448680">
        <id>O14965</id>
    </interactant>
    <interactant intactId="EBI-389606">
        <id>O15350</id>
        <label>TP73</label>
    </interactant>
    <organismsDiffer>false</organismsDiffer>
    <experiments>11</experiments>
</comment>
<comment type="interaction">
    <interactant intactId="EBI-448680">
        <id>O14965</id>
    </interactant>
    <interactant intactId="EBI-1037322">
        <id>Q9ULW0</id>
        <label>TPX2</label>
    </interactant>
    <organismsDiffer>false</organismsDiffer>
    <experiments>10</experiments>
</comment>
<comment type="interaction">
    <interactant intactId="EBI-448680">
        <id>O14965</id>
    </interactant>
    <interactant intactId="EBI-911012">
        <id>Q8VDQ8</id>
        <label>Sirt2</label>
    </interactant>
    <organismsDiffer>true</organismsDiffer>
    <experiments>5</experiments>
</comment>
<comment type="subcellular location">
    <subcellularLocation>
        <location evidence="15 16 33 38 44 52 54 56 58 65 66">Cytoplasm</location>
        <location evidence="15 16 33 38 44 52 54 56 58 65 66">Cytoskeleton</location>
        <location evidence="15 16 33 38 44 52 54 56 58 65 66">Microtubule organizing center</location>
        <location evidence="15 16 33 38 44 52 54 56 58 65 66">Centrosome</location>
    </subcellularLocation>
    <subcellularLocation>
        <location evidence="15 16 38 43 58 60 66 68">Cytoplasm</location>
        <location evidence="15 16 38 43 58 60 66 68">Cytoskeleton</location>
        <location evidence="15 16 38 43 58 60 66 68">Spindle pole</location>
    </subcellularLocation>
    <subcellularLocation>
        <location evidence="4">Cytoplasm</location>
        <location evidence="4">Cytoskeleton</location>
        <location evidence="4">Microtubule organizing center</location>
        <location evidence="4">Centrosome</location>
        <location evidence="4">Centriole</location>
    </subcellularLocation>
    <subcellularLocation>
        <location evidence="4">Cell projection</location>
        <location evidence="4">Neuron projection</location>
    </subcellularLocation>
    <subcellularLocation>
        <location evidence="37">Cell projection</location>
        <location evidence="37">Cilium</location>
    </subcellularLocation>
    <subcellularLocation>
        <location evidence="37">Cytoplasm</location>
        <location evidence="37">Cytoskeleton</location>
        <location evidence="37">Cilium basal body</location>
    </subcellularLocation>
    <subcellularLocation>
        <location evidence="2">Basolateral cell membrane</location>
    </subcellularLocation>
    <text evidence="4 33 38 52 54 60 68">Detected at the neurite hillock in developing neurons (By similarity). Localizes at the centrosome in mitotic cells from early prophase until telophase, but also localizes to the spindle pole MTs from prophase to anaphase (PubMed:17229885, PubMed:21225229, PubMed:9606188). Colocalized with SIRT2 at centrosome (PubMed:22014574). Moves to the midbody during both telophase and cytokinesis (PubMed:17726514). Associates with both the pericentriolar material (PCM) and centrioles (PubMed:22014574). The localization to the spindle poles is regulated by AAAS (PubMed:26246606).</text>
</comment>
<comment type="tissue specificity">
    <text>Highly expressed in testis and weakly in skeletal muscle, thymus and spleen. Also highly expressed in colon, ovarian, prostate, neuroblastoma, breast and cervical cancer cell lines.</text>
</comment>
<comment type="induction">
    <text evidence="11 13 26 66 68">Expression is cell-cycle regulated, low in G1/S, accumulates during G2/M, and decreases rapidly after.</text>
</comment>
<comment type="PTM">
    <text evidence="9 10 13 16 18 28 33 41 46">Activated by phosphorylation at Thr-288; this brings about a change in the conformation of the activation segment. Phosphorylation at Thr-288 varies during the cell cycle and is highest during M phase. Autophosphorylated at Thr-288 upon TPX2 binding. Thr-288 can be phosphorylated by several kinases, including PAK and PKA. Protein phosphatase type 1 (PP1) binds AURKA and inhibits its activity by dephosphorylating Thr-288 during mitosis. Phosphorylation at Ser-342 decreases the kinase activity. PPP2CA controls degradation by dephosphorylating Ser-51 at the end of mitosis.</text>
</comment>
<comment type="PTM">
    <text evidence="4 8 9 56">Ubiquitinated by the E3 ubiquitin-protein ligase complex SCF(FBXL7) during mitosis, leading to its degradation by the proteasome (By similarity). Ubiquitinated by CHFR, leading to its degradation by the proteasome (By similarity). Ubiquitinated by the anaphase-promoting complex (APC), leading to its degradation by the proteasome (PubMed:10851084, PubMed:11039908). Ubiquitinated by the CUL3-KLHL18 ligase leading to its activation at the centrosome which is required for initiating mitotic entry (PubMed:23213400). Ubiquitination mediated by CUL3-KLHL18 ligase does not lead to its degradation by the proteasome (PubMed:23213400).</text>
</comment>
<comment type="miscellaneous">
    <text>Centrosome amplification can occur when the cycles are uncoupled, and this amplification is associated with cancer and with an increase in the levels of chromosomal instability.</text>
</comment>
<comment type="similarity">
    <text evidence="5">Belongs to the protein kinase superfamily. Ser/Thr protein kinase family. Aurora subfamily.</text>
</comment>
<comment type="caution">
    <text evidence="80">Authors initially considered AURKA/STK6 and STK15 as 2 different proteins (PubMed:9771714). It is clear that they are the same protein.</text>
</comment>
<comment type="caution">
    <text evidence="78 79">An article that concluded that AURKA-mediated phosphorylation of BRCA1 'Ser-308' plays a role in the normal cell cycle G2/M transition was withdrawn due to data manipulation of flow cytometry data.</text>
</comment>
<comment type="sequence caution" evidence="77">
    <conflict type="frameshift">
        <sequence resource="EMBL-CDS" id="BAA23592"/>
    </conflict>
</comment>
<comment type="online information" name="Atlas of Genetics and Cytogenetics in Oncology and Haematology">
    <link uri="https://atlasgeneticsoncology.org/gene/730/AURKA"/>
</comment>
<protein>
    <recommendedName>
        <fullName evidence="81">Aurora kinase A</fullName>
        <ecNumber evidence="12 29 42 45 61 63 64">2.7.11.1</ecNumber>
    </recommendedName>
    <alternativeName>
        <fullName evidence="70">Aurora 2</fullName>
    </alternativeName>
    <alternativeName>
        <fullName evidence="74">Aurora/IPL1-related kinase 1</fullName>
        <shortName evidence="74">ARK-1</shortName>
        <shortName evidence="75">Aurora-related kinase 1</shortName>
    </alternativeName>
    <alternativeName>
        <fullName evidence="71">Breast tumor-amplified kinase</fullName>
    </alternativeName>
    <alternativeName>
        <fullName evidence="4">Ipl1- and aurora-related kinase 1</fullName>
    </alternativeName>
    <alternativeName>
        <fullName evidence="72 73">Serine/threonine-protein kinase 15</fullName>
    </alternativeName>
    <alternativeName>
        <fullName evidence="76">Serine/threonine-protein kinase 6</fullName>
    </alternativeName>
    <alternativeName>
        <fullName evidence="4">Serine/threonine-protein kinase Ayk1</fullName>
    </alternativeName>
    <alternativeName>
        <fullName evidence="3">Serine/threonine-protein kinase aurora-A</fullName>
    </alternativeName>
</protein>
<sequence length="403" mass="45823">MDRSKENCISGPVKATAPVGGPKRVLVTQQFPCQNPLPVNSGQAQRVLCPSNSSQRIPLQAQKLVSSHKPVQNQKQKQLQATSVPHPVSRPLNNTQKSKQPLPSAPENNPEEELASKQKNEESKKRQWALEDFEIGRPLGKGKFGNVYLAREKQSKFILALKVLFKAQLEKAGVEHQLRREVEIQSHLRHPNILRLYGYFHDATRVYLILEYAPLGTVYRELQKLSKFDEQRTATYITELANALSYCHSKRVIHRDIKPENLLLGSAGELKIADFGWSVHAPSSRRTTLCGTLDYLPPEMIEGRMHDEKVDLWSLGVLCYEFLVGKPPFEANTYQETYKRISRVEFTFPDFVTEGARDLISRLLKHNPSQRPMLREVLEHPWITANSSKPSNCQNKESASKQS</sequence>
<gene>
    <name evidence="81" type="primary">AURKA</name>
    <name evidence="74" type="synonym">AIK</name>
    <name evidence="81" type="synonym">AIRK1</name>
    <name evidence="81" type="synonym">ARK1</name>
    <name evidence="81" type="synonym">AURA</name>
    <name evidence="4" type="synonym">AYK1</name>
    <name evidence="76" type="synonym">BTAK</name>
    <name evidence="4" type="synonym">IAK1</name>
    <name evidence="72 73" type="synonym">STK15</name>
    <name evidence="76" type="synonym">STK6</name>
</gene>
<organism>
    <name type="scientific">Homo sapiens</name>
    <name type="common">Human</name>
    <dbReference type="NCBI Taxonomy" id="9606"/>
    <lineage>
        <taxon>Eukaryota</taxon>
        <taxon>Metazoa</taxon>
        <taxon>Chordata</taxon>
        <taxon>Craniata</taxon>
        <taxon>Vertebrata</taxon>
        <taxon>Euteleostomi</taxon>
        <taxon>Mammalia</taxon>
        <taxon>Eutheria</taxon>
        <taxon>Euarchontoglires</taxon>
        <taxon>Primates</taxon>
        <taxon>Haplorrhini</taxon>
        <taxon>Catarrhini</taxon>
        <taxon>Hominidae</taxon>
        <taxon>Homo</taxon>
    </lineage>
</organism>
<accession>O14965</accession>
<accession>E1P5F9</accession>
<accession>O60445</accession>
<accession>O75873</accession>
<accession>Q9BQD6</accession>
<accession>Q9UPG5</accession>
<proteinExistence type="evidence at protein level"/>
<name>AURKA_HUMAN</name>
<dbReference type="EC" id="2.7.11.1" evidence="12 29 42 45 61 63 64"/>
<dbReference type="EMBL" id="D84212">
    <property type="protein sequence ID" value="BAA23592.1"/>
    <property type="status" value="ALT_FRAME"/>
    <property type="molecule type" value="mRNA"/>
</dbReference>
<dbReference type="EMBL" id="AF008551">
    <property type="protein sequence ID" value="AAC12708.1"/>
    <property type="molecule type" value="mRNA"/>
</dbReference>
<dbReference type="EMBL" id="AF011467">
    <property type="protein sequence ID" value="AAC23448.1"/>
    <property type="molecule type" value="Genomic_DNA"/>
</dbReference>
<dbReference type="EMBL" id="AF011468">
    <property type="protein sequence ID" value="AAC63902.1"/>
    <property type="molecule type" value="mRNA"/>
</dbReference>
<dbReference type="EMBL" id="AF195947">
    <property type="protein sequence ID" value="AAF29508.1"/>
    <property type="molecule type" value="Genomic_DNA"/>
</dbReference>
<dbReference type="EMBL" id="AF195942">
    <property type="protein sequence ID" value="AAF29508.1"/>
    <property type="status" value="JOINED"/>
    <property type="molecule type" value="Genomic_DNA"/>
</dbReference>
<dbReference type="EMBL" id="AF195943">
    <property type="protein sequence ID" value="AAF29508.1"/>
    <property type="status" value="JOINED"/>
    <property type="molecule type" value="Genomic_DNA"/>
</dbReference>
<dbReference type="EMBL" id="AF195944">
    <property type="protein sequence ID" value="AAF29508.1"/>
    <property type="status" value="JOINED"/>
    <property type="molecule type" value="Genomic_DNA"/>
</dbReference>
<dbReference type="EMBL" id="AF195945">
    <property type="protein sequence ID" value="AAF29508.1"/>
    <property type="status" value="JOINED"/>
    <property type="molecule type" value="Genomic_DNA"/>
</dbReference>
<dbReference type="EMBL" id="AF195946">
    <property type="protein sequence ID" value="AAF29508.1"/>
    <property type="status" value="JOINED"/>
    <property type="molecule type" value="Genomic_DNA"/>
</dbReference>
<dbReference type="EMBL" id="AL121914">
    <property type="status" value="NOT_ANNOTATED_CDS"/>
    <property type="molecule type" value="Genomic_DNA"/>
</dbReference>
<dbReference type="EMBL" id="CH471077">
    <property type="protein sequence ID" value="EAW75550.1"/>
    <property type="molecule type" value="Genomic_DNA"/>
</dbReference>
<dbReference type="EMBL" id="CH471077">
    <property type="protein sequence ID" value="EAW75551.1"/>
    <property type="molecule type" value="Genomic_DNA"/>
</dbReference>
<dbReference type="EMBL" id="CH471077">
    <property type="protein sequence ID" value="EAW75552.1"/>
    <property type="molecule type" value="Genomic_DNA"/>
</dbReference>
<dbReference type="EMBL" id="CH471077">
    <property type="protein sequence ID" value="EAW75553.1"/>
    <property type="molecule type" value="Genomic_DNA"/>
</dbReference>
<dbReference type="EMBL" id="CH471077">
    <property type="protein sequence ID" value="EAW75554.1"/>
    <property type="molecule type" value="Genomic_DNA"/>
</dbReference>
<dbReference type="EMBL" id="CH471077">
    <property type="protein sequence ID" value="EAW75555.1"/>
    <property type="molecule type" value="Genomic_DNA"/>
</dbReference>
<dbReference type="EMBL" id="CH471077">
    <property type="protein sequence ID" value="EAW75556.1"/>
    <property type="molecule type" value="Genomic_DNA"/>
</dbReference>
<dbReference type="EMBL" id="CH471077">
    <property type="protein sequence ID" value="EAW75557.1"/>
    <property type="molecule type" value="Genomic_DNA"/>
</dbReference>
<dbReference type="EMBL" id="CH471077">
    <property type="protein sequence ID" value="EAW75558.1"/>
    <property type="molecule type" value="Genomic_DNA"/>
</dbReference>
<dbReference type="EMBL" id="CH471077">
    <property type="protein sequence ID" value="EAW75559.1"/>
    <property type="molecule type" value="Genomic_DNA"/>
</dbReference>
<dbReference type="EMBL" id="CH471077">
    <property type="protein sequence ID" value="EAW75561.1"/>
    <property type="molecule type" value="Genomic_DNA"/>
</dbReference>
<dbReference type="EMBL" id="CH471077">
    <property type="protein sequence ID" value="EAW75562.1"/>
    <property type="molecule type" value="Genomic_DNA"/>
</dbReference>
<dbReference type="EMBL" id="BC001280">
    <property type="protein sequence ID" value="AAH01280.1"/>
    <property type="molecule type" value="mRNA"/>
</dbReference>
<dbReference type="EMBL" id="BC002499">
    <property type="protein sequence ID" value="AAH02499.1"/>
    <property type="molecule type" value="mRNA"/>
</dbReference>
<dbReference type="EMBL" id="BC006423">
    <property type="protein sequence ID" value="AAH06423.1"/>
    <property type="molecule type" value="mRNA"/>
</dbReference>
<dbReference type="EMBL" id="BC027464">
    <property type="protein sequence ID" value="AAH27464.1"/>
    <property type="molecule type" value="mRNA"/>
</dbReference>
<dbReference type="CCDS" id="CCDS13451.1"/>
<dbReference type="PIR" id="JC5974">
    <property type="entry name" value="JC5974"/>
</dbReference>
<dbReference type="RefSeq" id="NP_001310232.1">
    <property type="nucleotide sequence ID" value="NM_001323303.2"/>
</dbReference>
<dbReference type="RefSeq" id="NP_001310233.1">
    <property type="nucleotide sequence ID" value="NM_001323304.2"/>
</dbReference>
<dbReference type="RefSeq" id="NP_001310234.1">
    <property type="nucleotide sequence ID" value="NM_001323305.2"/>
</dbReference>
<dbReference type="RefSeq" id="NP_001411346.1">
    <property type="nucleotide sequence ID" value="NM_001424417.1"/>
</dbReference>
<dbReference type="RefSeq" id="NP_003591.2">
    <property type="nucleotide sequence ID" value="NM_003600.3"/>
</dbReference>
<dbReference type="RefSeq" id="NP_940835.1">
    <property type="nucleotide sequence ID" value="NM_198433.3"/>
</dbReference>
<dbReference type="RefSeq" id="NP_940836.1">
    <property type="nucleotide sequence ID" value="NM_198434.3"/>
</dbReference>
<dbReference type="RefSeq" id="NP_940837.1">
    <property type="nucleotide sequence ID" value="NM_198435.3"/>
</dbReference>
<dbReference type="RefSeq" id="NP_940838.1">
    <property type="nucleotide sequence ID" value="NM_198436.3"/>
</dbReference>
<dbReference type="RefSeq" id="NP_940839.1">
    <property type="nucleotide sequence ID" value="NM_198437.3"/>
</dbReference>
<dbReference type="RefSeq" id="XP_016883524.1">
    <property type="nucleotide sequence ID" value="XM_017028035.1"/>
</dbReference>
<dbReference type="PDB" id="1MQ4">
    <property type="method" value="X-ray"/>
    <property type="resolution" value="1.90 A"/>
    <property type="chains" value="A=125-391"/>
</dbReference>
<dbReference type="PDB" id="1MUO">
    <property type="method" value="X-ray"/>
    <property type="resolution" value="2.90 A"/>
    <property type="chains" value="A=107-403"/>
</dbReference>
<dbReference type="PDB" id="1OL5">
    <property type="method" value="X-ray"/>
    <property type="resolution" value="2.50 A"/>
    <property type="chains" value="A=122-403"/>
</dbReference>
<dbReference type="PDB" id="1OL6">
    <property type="method" value="X-ray"/>
    <property type="resolution" value="3.00 A"/>
    <property type="chains" value="A=122-403"/>
</dbReference>
<dbReference type="PDB" id="1OL7">
    <property type="method" value="X-ray"/>
    <property type="resolution" value="2.75 A"/>
    <property type="chains" value="A=122-403"/>
</dbReference>
<dbReference type="PDB" id="2BMC">
    <property type="method" value="X-ray"/>
    <property type="resolution" value="2.60 A"/>
    <property type="chains" value="A/B/C/D/E/F=100-403"/>
</dbReference>
<dbReference type="PDB" id="2C6D">
    <property type="method" value="X-ray"/>
    <property type="resolution" value="2.20 A"/>
    <property type="chains" value="A=124-398"/>
</dbReference>
<dbReference type="PDB" id="2C6E">
    <property type="method" value="X-ray"/>
    <property type="resolution" value="2.10 A"/>
    <property type="chains" value="A/B=123-401"/>
</dbReference>
<dbReference type="PDB" id="2DWB">
    <property type="method" value="X-ray"/>
    <property type="resolution" value="2.50 A"/>
    <property type="chains" value="A=122-403"/>
</dbReference>
<dbReference type="PDB" id="2J4Z">
    <property type="method" value="X-ray"/>
    <property type="resolution" value="2.00 A"/>
    <property type="chains" value="A/B=100-403"/>
</dbReference>
<dbReference type="PDB" id="2J50">
    <property type="method" value="X-ray"/>
    <property type="resolution" value="3.00 A"/>
    <property type="chains" value="A/B=126-403"/>
</dbReference>
<dbReference type="PDB" id="2NP8">
    <property type="method" value="X-ray"/>
    <property type="resolution" value="2.25 A"/>
    <property type="chains" value="A=125-391"/>
</dbReference>
<dbReference type="PDB" id="2W1C">
    <property type="method" value="X-ray"/>
    <property type="resolution" value="3.24 A"/>
    <property type="chains" value="A=122-389"/>
</dbReference>
<dbReference type="PDB" id="2W1D">
    <property type="method" value="X-ray"/>
    <property type="resolution" value="2.97 A"/>
    <property type="chains" value="A=122-389"/>
</dbReference>
<dbReference type="PDB" id="2W1E">
    <property type="method" value="X-ray"/>
    <property type="resolution" value="2.93 A"/>
    <property type="chains" value="A=122-389"/>
</dbReference>
<dbReference type="PDB" id="2W1F">
    <property type="method" value="X-ray"/>
    <property type="resolution" value="2.85 A"/>
    <property type="chains" value="A=122-389"/>
</dbReference>
<dbReference type="PDB" id="2W1G">
    <property type="method" value="X-ray"/>
    <property type="resolution" value="2.71 A"/>
    <property type="chains" value="A=122-389"/>
</dbReference>
<dbReference type="PDB" id="2WQE">
    <property type="method" value="X-ray"/>
    <property type="resolution" value="2.50 A"/>
    <property type="chains" value="A=127-388"/>
</dbReference>
<dbReference type="PDB" id="2WTV">
    <property type="method" value="X-ray"/>
    <property type="resolution" value="2.40 A"/>
    <property type="chains" value="A/B/C/D=122-403"/>
</dbReference>
<dbReference type="PDB" id="2WTW">
    <property type="method" value="X-ray"/>
    <property type="resolution" value="3.30 A"/>
    <property type="chains" value="A=122-403"/>
</dbReference>
<dbReference type="PDB" id="2X6D">
    <property type="method" value="X-ray"/>
    <property type="resolution" value="2.80 A"/>
    <property type="chains" value="A=122-403"/>
</dbReference>
<dbReference type="PDB" id="2X6E">
    <property type="method" value="X-ray"/>
    <property type="resolution" value="3.35 A"/>
    <property type="chains" value="A=122-403"/>
</dbReference>
<dbReference type="PDB" id="2X81">
    <property type="method" value="X-ray"/>
    <property type="resolution" value="2.91 A"/>
    <property type="chains" value="A=126-391"/>
</dbReference>
<dbReference type="PDB" id="2XNE">
    <property type="method" value="X-ray"/>
    <property type="resolution" value="2.80 A"/>
    <property type="chains" value="A=122-392"/>
</dbReference>
<dbReference type="PDB" id="2XNG">
    <property type="method" value="X-ray"/>
    <property type="resolution" value="2.60 A"/>
    <property type="chains" value="A=122-403"/>
</dbReference>
<dbReference type="PDB" id="2XRU">
    <property type="method" value="X-ray"/>
    <property type="resolution" value="2.90 A"/>
    <property type="chains" value="A=126-403"/>
</dbReference>
<dbReference type="PDB" id="3COH">
    <property type="method" value="X-ray"/>
    <property type="resolution" value="2.70 A"/>
    <property type="chains" value="A/B=124-391"/>
</dbReference>
<dbReference type="PDB" id="3E5A">
    <property type="method" value="X-ray"/>
    <property type="resolution" value="2.30 A"/>
    <property type="chains" value="A=125-391"/>
</dbReference>
<dbReference type="PDB" id="3EFW">
    <property type="method" value="X-ray"/>
    <property type="resolution" value="2.29 A"/>
    <property type="chains" value="A/B=125-391"/>
</dbReference>
<dbReference type="PDB" id="3FDN">
    <property type="method" value="X-ray"/>
    <property type="resolution" value="1.90 A"/>
    <property type="chains" value="A=123-401"/>
</dbReference>
<dbReference type="PDB" id="3H0Y">
    <property type="method" value="X-ray"/>
    <property type="resolution" value="2.50 A"/>
    <property type="chains" value="A=124-391"/>
</dbReference>
<dbReference type="PDB" id="3H0Z">
    <property type="method" value="X-ray"/>
    <property type="resolution" value="2.92 A"/>
    <property type="chains" value="A/B/C=124-391"/>
</dbReference>
<dbReference type="PDB" id="3H10">
    <property type="method" value="X-ray"/>
    <property type="resolution" value="2.20 A"/>
    <property type="chains" value="A/B/D=124-391"/>
</dbReference>
<dbReference type="PDB" id="3HA6">
    <property type="method" value="X-ray"/>
    <property type="resolution" value="2.36 A"/>
    <property type="chains" value="A=125-391"/>
</dbReference>
<dbReference type="PDB" id="3K5U">
    <property type="method" value="X-ray"/>
    <property type="resolution" value="2.35 A"/>
    <property type="chains" value="A=123-401"/>
</dbReference>
<dbReference type="PDB" id="3LAU">
    <property type="method" value="X-ray"/>
    <property type="resolution" value="2.10 A"/>
    <property type="chains" value="A=125-399"/>
</dbReference>
<dbReference type="PDB" id="3M11">
    <property type="method" value="X-ray"/>
    <property type="resolution" value="2.75 A"/>
    <property type="chains" value="A=123-401"/>
</dbReference>
<dbReference type="PDB" id="3MYG">
    <property type="method" value="X-ray"/>
    <property type="resolution" value="2.40 A"/>
    <property type="chains" value="A=125-391"/>
</dbReference>
<dbReference type="PDB" id="3NRM">
    <property type="method" value="X-ray"/>
    <property type="resolution" value="3.05 A"/>
    <property type="chains" value="A=126-403"/>
</dbReference>
<dbReference type="PDB" id="3O50">
    <property type="method" value="X-ray"/>
    <property type="resolution" value="2.00 A"/>
    <property type="chains" value="A/B=125-391"/>
</dbReference>
<dbReference type="PDB" id="3O51">
    <property type="method" value="X-ray"/>
    <property type="resolution" value="3.20 A"/>
    <property type="chains" value="A=125-391"/>
</dbReference>
<dbReference type="PDB" id="3P9J">
    <property type="method" value="X-ray"/>
    <property type="resolution" value="2.80 A"/>
    <property type="chains" value="A=125-391"/>
</dbReference>
<dbReference type="PDB" id="3QBN">
    <property type="method" value="X-ray"/>
    <property type="resolution" value="3.50 A"/>
    <property type="chains" value="A=124-403"/>
</dbReference>
<dbReference type="PDB" id="3R21">
    <property type="method" value="X-ray"/>
    <property type="resolution" value="2.90 A"/>
    <property type="chains" value="A=126-391"/>
</dbReference>
<dbReference type="PDB" id="3R22">
    <property type="method" value="X-ray"/>
    <property type="resolution" value="2.90 A"/>
    <property type="chains" value="A=126-391"/>
</dbReference>
<dbReference type="PDB" id="3UNZ">
    <property type="method" value="X-ray"/>
    <property type="resolution" value="2.80 A"/>
    <property type="chains" value="A/B=123-401"/>
</dbReference>
<dbReference type="PDB" id="3UO4">
    <property type="method" value="X-ray"/>
    <property type="resolution" value="2.45 A"/>
    <property type="chains" value="A=123-401"/>
</dbReference>
<dbReference type="PDB" id="3UO5">
    <property type="method" value="X-ray"/>
    <property type="resolution" value="2.70 A"/>
    <property type="chains" value="A=123-401"/>
</dbReference>
<dbReference type="PDB" id="3UO6">
    <property type="method" value="X-ray"/>
    <property type="resolution" value="2.80 A"/>
    <property type="chains" value="A/B=123-401"/>
</dbReference>
<dbReference type="PDB" id="3UOD">
    <property type="method" value="X-ray"/>
    <property type="resolution" value="2.50 A"/>
    <property type="chains" value="A=123-401"/>
</dbReference>
<dbReference type="PDB" id="3UOH">
    <property type="method" value="X-ray"/>
    <property type="resolution" value="2.80 A"/>
    <property type="chains" value="A/B=123-401"/>
</dbReference>
<dbReference type="PDB" id="3UOJ">
    <property type="method" value="X-ray"/>
    <property type="resolution" value="2.90 A"/>
    <property type="chains" value="A/B=123-401"/>
</dbReference>
<dbReference type="PDB" id="3UOK">
    <property type="method" value="X-ray"/>
    <property type="resolution" value="2.95 A"/>
    <property type="chains" value="A/B=123-401"/>
</dbReference>
<dbReference type="PDB" id="3UOL">
    <property type="method" value="X-ray"/>
    <property type="resolution" value="2.40 A"/>
    <property type="chains" value="A/B=123-401"/>
</dbReference>
<dbReference type="PDB" id="3UP2">
    <property type="method" value="X-ray"/>
    <property type="resolution" value="2.30 A"/>
    <property type="chains" value="A=123-401"/>
</dbReference>
<dbReference type="PDB" id="3UP7">
    <property type="method" value="X-ray"/>
    <property type="resolution" value="3.05 A"/>
    <property type="chains" value="A=123-401"/>
</dbReference>
<dbReference type="PDB" id="3VAP">
    <property type="method" value="X-ray"/>
    <property type="resolution" value="2.66 A"/>
    <property type="chains" value="A=125-391"/>
</dbReference>
<dbReference type="PDB" id="3W10">
    <property type="method" value="X-ray"/>
    <property type="resolution" value="2.70 A"/>
    <property type="chains" value="A=126-403"/>
</dbReference>
<dbReference type="PDB" id="3W16">
    <property type="method" value="X-ray"/>
    <property type="resolution" value="2.80 A"/>
    <property type="chains" value="A=126-403"/>
</dbReference>
<dbReference type="PDB" id="3W18">
    <property type="method" value="X-ray"/>
    <property type="resolution" value="2.50 A"/>
    <property type="chains" value="A/B=126-403"/>
</dbReference>
<dbReference type="PDB" id="3W2C">
    <property type="method" value="X-ray"/>
    <property type="resolution" value="2.45 A"/>
    <property type="chains" value="A/C/E/G=128-388"/>
</dbReference>
<dbReference type="PDB" id="4B0G">
    <property type="method" value="X-ray"/>
    <property type="resolution" value="2.50 A"/>
    <property type="chains" value="A=122-403"/>
</dbReference>
<dbReference type="PDB" id="4BN1">
    <property type="method" value="X-ray"/>
    <property type="resolution" value="2.50 A"/>
    <property type="chains" value="A=122-403"/>
</dbReference>
<dbReference type="PDB" id="4BYI">
    <property type="method" value="X-ray"/>
    <property type="resolution" value="2.60 A"/>
    <property type="chains" value="A=122-403"/>
</dbReference>
<dbReference type="PDB" id="4BYJ">
    <property type="method" value="X-ray"/>
    <property type="resolution" value="2.75 A"/>
    <property type="chains" value="A=122-403"/>
</dbReference>
<dbReference type="PDB" id="4C3P">
    <property type="method" value="X-ray"/>
    <property type="resolution" value="2.69 A"/>
    <property type="chains" value="A/D=122-403"/>
</dbReference>
<dbReference type="PDB" id="4C3R">
    <property type="method" value="X-ray"/>
    <property type="resolution" value="2.79 A"/>
    <property type="chains" value="A=122-403"/>
</dbReference>
<dbReference type="PDB" id="4CEG">
    <property type="method" value="X-ray"/>
    <property type="resolution" value="2.10 A"/>
    <property type="chains" value="A=122-403"/>
</dbReference>
<dbReference type="PDB" id="4DEA">
    <property type="method" value="X-ray"/>
    <property type="resolution" value="2.45 A"/>
    <property type="chains" value="A=123-401"/>
</dbReference>
<dbReference type="PDB" id="4DEB">
    <property type="method" value="X-ray"/>
    <property type="resolution" value="3.05 A"/>
    <property type="chains" value="A=123-401"/>
</dbReference>
<dbReference type="PDB" id="4DED">
    <property type="method" value="X-ray"/>
    <property type="resolution" value="3.05 A"/>
    <property type="chains" value="A=123-401"/>
</dbReference>
<dbReference type="PDB" id="4DEE">
    <property type="method" value="X-ray"/>
    <property type="resolution" value="2.30 A"/>
    <property type="chains" value="A=123-401"/>
</dbReference>
<dbReference type="PDB" id="4DHF">
    <property type="method" value="X-ray"/>
    <property type="resolution" value="2.80 A"/>
    <property type="chains" value="A/B=126-391"/>
</dbReference>
<dbReference type="PDB" id="4J8M">
    <property type="method" value="X-ray"/>
    <property type="resolution" value="1.85 A"/>
    <property type="chains" value="A=123-401"/>
</dbReference>
<dbReference type="PDB" id="4J8N">
    <property type="method" value="X-ray"/>
    <property type="resolution" value="3.14 A"/>
    <property type="chains" value="A/B/C/D=123-401"/>
</dbReference>
<dbReference type="PDB" id="4JAI">
    <property type="method" value="X-ray"/>
    <property type="resolution" value="3.20 A"/>
    <property type="chains" value="A=122-396"/>
</dbReference>
<dbReference type="PDB" id="4JAJ">
    <property type="method" value="X-ray"/>
    <property type="resolution" value="2.70 A"/>
    <property type="chains" value="A=122-396"/>
</dbReference>
<dbReference type="PDB" id="4JBO">
    <property type="method" value="X-ray"/>
    <property type="resolution" value="2.49 A"/>
    <property type="chains" value="A=123-401"/>
</dbReference>
<dbReference type="PDB" id="4JBP">
    <property type="method" value="X-ray"/>
    <property type="resolution" value="2.45 A"/>
    <property type="chains" value="A=123-401"/>
</dbReference>
<dbReference type="PDB" id="4JBQ">
    <property type="method" value="X-ray"/>
    <property type="resolution" value="2.30 A"/>
    <property type="chains" value="A=123-401"/>
</dbReference>
<dbReference type="PDB" id="4O0S">
    <property type="method" value="X-ray"/>
    <property type="resolution" value="2.50 A"/>
    <property type="chains" value="A=122-403"/>
</dbReference>
<dbReference type="PDB" id="4O0U">
    <property type="method" value="X-ray"/>
    <property type="resolution" value="2.60 A"/>
    <property type="chains" value="A=122-403"/>
</dbReference>
<dbReference type="PDB" id="4O0W">
    <property type="method" value="X-ray"/>
    <property type="resolution" value="2.60 A"/>
    <property type="chains" value="A=122-403"/>
</dbReference>
<dbReference type="PDB" id="4PRJ">
    <property type="method" value="X-ray"/>
    <property type="resolution" value="2.80 A"/>
    <property type="chains" value="A=124-391"/>
</dbReference>
<dbReference type="PDB" id="4UYN">
    <property type="method" value="X-ray"/>
    <property type="resolution" value="1.90 A"/>
    <property type="chains" value="A=125-399"/>
</dbReference>
<dbReference type="PDB" id="4UZD">
    <property type="method" value="X-ray"/>
    <property type="resolution" value="3.20 A"/>
    <property type="chains" value="A/B=125-399"/>
</dbReference>
<dbReference type="PDB" id="4UZH">
    <property type="method" value="X-ray"/>
    <property type="resolution" value="2.00 A"/>
    <property type="chains" value="A=125-399"/>
</dbReference>
<dbReference type="PDB" id="4ZS0">
    <property type="method" value="X-ray"/>
    <property type="resolution" value="3.00 A"/>
    <property type="chains" value="A=122-403"/>
</dbReference>
<dbReference type="PDB" id="4ZTQ">
    <property type="method" value="X-ray"/>
    <property type="resolution" value="2.80 A"/>
    <property type="chains" value="A=122-403"/>
</dbReference>
<dbReference type="PDB" id="4ZTR">
    <property type="method" value="X-ray"/>
    <property type="resolution" value="2.85 A"/>
    <property type="chains" value="A=122-403"/>
</dbReference>
<dbReference type="PDB" id="4ZTS">
    <property type="method" value="X-ray"/>
    <property type="resolution" value="2.90 A"/>
    <property type="chains" value="A=122-403"/>
</dbReference>
<dbReference type="PDB" id="5AAD">
    <property type="method" value="X-ray"/>
    <property type="resolution" value="3.10 A"/>
    <property type="chains" value="A=122-403"/>
</dbReference>
<dbReference type="PDB" id="5AAE">
    <property type="method" value="X-ray"/>
    <property type="resolution" value="3.11 A"/>
    <property type="chains" value="A=122-403"/>
</dbReference>
<dbReference type="PDB" id="5AAF">
    <property type="method" value="X-ray"/>
    <property type="resolution" value="2.78 A"/>
    <property type="chains" value="A=122-403"/>
</dbReference>
<dbReference type="PDB" id="5AAG">
    <property type="method" value="X-ray"/>
    <property type="resolution" value="2.85 A"/>
    <property type="chains" value="A=122-403"/>
</dbReference>
<dbReference type="PDB" id="5DN3">
    <property type="method" value="X-ray"/>
    <property type="resolution" value="2.05 A"/>
    <property type="chains" value="A=125-391"/>
</dbReference>
<dbReference type="PDB" id="5DNR">
    <property type="method" value="X-ray"/>
    <property type="resolution" value="1.95 A"/>
    <property type="chains" value="A=125-391"/>
</dbReference>
<dbReference type="PDB" id="5DOS">
    <property type="method" value="X-ray"/>
    <property type="resolution" value="2.98 A"/>
    <property type="chains" value="A=126-390"/>
</dbReference>
<dbReference type="PDB" id="5DPV">
    <property type="method" value="X-ray"/>
    <property type="resolution" value="2.29 A"/>
    <property type="chains" value="A=126-390"/>
</dbReference>
<dbReference type="PDB" id="5DR2">
    <property type="method" value="X-ray"/>
    <property type="resolution" value="2.46 A"/>
    <property type="chains" value="A=128-390"/>
</dbReference>
<dbReference type="PDB" id="5DR6">
    <property type="method" value="X-ray"/>
    <property type="resolution" value="2.53 A"/>
    <property type="chains" value="A=126-390"/>
</dbReference>
<dbReference type="PDB" id="5DR9">
    <property type="method" value="X-ray"/>
    <property type="resolution" value="2.47 A"/>
    <property type="chains" value="A=126-390"/>
</dbReference>
<dbReference type="PDB" id="5DRD">
    <property type="method" value="X-ray"/>
    <property type="resolution" value="2.13 A"/>
    <property type="chains" value="A=126-390"/>
</dbReference>
<dbReference type="PDB" id="5DT0">
    <property type="method" value="X-ray"/>
    <property type="resolution" value="2.15 A"/>
    <property type="chains" value="A=126-390"/>
</dbReference>
<dbReference type="PDB" id="5DT3">
    <property type="method" value="X-ray"/>
    <property type="resolution" value="2.33 A"/>
    <property type="chains" value="A=126-390"/>
</dbReference>
<dbReference type="PDB" id="5DT4">
    <property type="method" value="X-ray"/>
    <property type="resolution" value="2.86 A"/>
    <property type="chains" value="A=126-390"/>
</dbReference>
<dbReference type="PDB" id="5EW9">
    <property type="method" value="X-ray"/>
    <property type="resolution" value="2.18 A"/>
    <property type="chains" value="A=123-390"/>
</dbReference>
<dbReference type="PDB" id="5G15">
    <property type="method" value="X-ray"/>
    <property type="resolution" value="2.06 A"/>
    <property type="chains" value="A=122-403"/>
</dbReference>
<dbReference type="PDB" id="5G1X">
    <property type="method" value="X-ray"/>
    <property type="resolution" value="1.72 A"/>
    <property type="chains" value="A=122-403"/>
</dbReference>
<dbReference type="PDB" id="5L8J">
    <property type="method" value="X-ray"/>
    <property type="resolution" value="1.68 A"/>
    <property type="chains" value="A=122-403"/>
</dbReference>
<dbReference type="PDB" id="5L8K">
    <property type="method" value="X-ray"/>
    <property type="resolution" value="1.79 A"/>
    <property type="chains" value="A=122-403"/>
</dbReference>
<dbReference type="PDB" id="5L8L">
    <property type="method" value="X-ray"/>
    <property type="resolution" value="1.67 A"/>
    <property type="chains" value="A=122-403"/>
</dbReference>
<dbReference type="PDB" id="5LXM">
    <property type="method" value="X-ray"/>
    <property type="resolution" value="2.08 A"/>
    <property type="chains" value="A=122-403"/>
</dbReference>
<dbReference type="PDB" id="5OBJ">
    <property type="method" value="X-ray"/>
    <property type="resolution" value="2.90 A"/>
    <property type="chains" value="A=125-391"/>
</dbReference>
<dbReference type="PDB" id="5OBR">
    <property type="method" value="X-ray"/>
    <property type="resolution" value="2.62 A"/>
    <property type="chains" value="A=125-391"/>
</dbReference>
<dbReference type="PDB" id="5ODT">
    <property type="method" value="X-ray"/>
    <property type="resolution" value="2.02 A"/>
    <property type="chains" value="A=122-403"/>
</dbReference>
<dbReference type="PDB" id="5ONE">
    <property type="method" value="X-ray"/>
    <property type="resolution" value="2.60 A"/>
    <property type="chains" value="A=122-403"/>
</dbReference>
<dbReference type="PDB" id="5ORL">
    <property type="method" value="X-ray"/>
    <property type="resolution" value="1.69 A"/>
    <property type="chains" value="A=127-391"/>
</dbReference>
<dbReference type="PDB" id="5ORN">
    <property type="method" value="X-ray"/>
    <property type="resolution" value="2.19 A"/>
    <property type="chains" value="A=127-391"/>
</dbReference>
<dbReference type="PDB" id="5ORO">
    <property type="method" value="X-ray"/>
    <property type="resolution" value="2.12 A"/>
    <property type="chains" value="A=127-391"/>
</dbReference>
<dbReference type="PDB" id="5ORP">
    <property type="method" value="X-ray"/>
    <property type="resolution" value="2.19 A"/>
    <property type="chains" value="A=127-391"/>
</dbReference>
<dbReference type="PDB" id="5ORR">
    <property type="method" value="X-ray"/>
    <property type="resolution" value="2.09 A"/>
    <property type="chains" value="A=127-391"/>
</dbReference>
<dbReference type="PDB" id="5ORS">
    <property type="method" value="X-ray"/>
    <property type="resolution" value="1.98 A"/>
    <property type="chains" value="A=127-391"/>
</dbReference>
<dbReference type="PDB" id="5ORT">
    <property type="method" value="X-ray"/>
    <property type="resolution" value="2.56 A"/>
    <property type="chains" value="A=127-391"/>
</dbReference>
<dbReference type="PDB" id="5ORV">
    <property type="method" value="X-ray"/>
    <property type="resolution" value="1.88 A"/>
    <property type="chains" value="A=127-391"/>
</dbReference>
<dbReference type="PDB" id="5ORW">
    <property type="method" value="X-ray"/>
    <property type="resolution" value="2.00 A"/>
    <property type="chains" value="A=127-391"/>
</dbReference>
<dbReference type="PDB" id="5ORX">
    <property type="method" value="X-ray"/>
    <property type="resolution" value="1.88 A"/>
    <property type="chains" value="A=127-391"/>
</dbReference>
<dbReference type="PDB" id="5ORY">
    <property type="method" value="X-ray"/>
    <property type="resolution" value="1.99 A"/>
    <property type="chains" value="A=127-391"/>
</dbReference>
<dbReference type="PDB" id="5ORZ">
    <property type="method" value="X-ray"/>
    <property type="resolution" value="1.92 A"/>
    <property type="chains" value="A=127-391"/>
</dbReference>
<dbReference type="PDB" id="5OS0">
    <property type="method" value="X-ray"/>
    <property type="resolution" value="1.74 A"/>
    <property type="chains" value="A=127-391"/>
</dbReference>
<dbReference type="PDB" id="5OS1">
    <property type="method" value="X-ray"/>
    <property type="resolution" value="1.90 A"/>
    <property type="chains" value="A=127-391"/>
</dbReference>
<dbReference type="PDB" id="5OS2">
    <property type="method" value="X-ray"/>
    <property type="resolution" value="1.92 A"/>
    <property type="chains" value="A=127-391"/>
</dbReference>
<dbReference type="PDB" id="5OS3">
    <property type="method" value="X-ray"/>
    <property type="resolution" value="1.81 A"/>
    <property type="chains" value="A=127-391"/>
</dbReference>
<dbReference type="PDB" id="5OS4">
    <property type="method" value="X-ray"/>
    <property type="resolution" value="1.88 A"/>
    <property type="chains" value="A=127-391"/>
</dbReference>
<dbReference type="PDB" id="5OS5">
    <property type="method" value="X-ray"/>
    <property type="resolution" value="1.74 A"/>
    <property type="chains" value="A=125-392"/>
</dbReference>
<dbReference type="PDB" id="5OS6">
    <property type="method" value="X-ray"/>
    <property type="resolution" value="2.20 A"/>
    <property type="chains" value="A=127-391"/>
</dbReference>
<dbReference type="PDB" id="5OSD">
    <property type="method" value="X-ray"/>
    <property type="resolution" value="1.99 A"/>
    <property type="chains" value="A=125-391"/>
</dbReference>
<dbReference type="PDB" id="5OSE">
    <property type="method" value="X-ray"/>
    <property type="resolution" value="1.90 A"/>
    <property type="chains" value="A=127-391"/>
</dbReference>
<dbReference type="PDB" id="5OSF">
    <property type="method" value="X-ray"/>
    <property type="resolution" value="1.89 A"/>
    <property type="chains" value="A=127-391"/>
</dbReference>
<dbReference type="PDB" id="5ZAN">
    <property type="method" value="X-ray"/>
    <property type="resolution" value="2.85 A"/>
    <property type="chains" value="A=123-403"/>
</dbReference>
<dbReference type="PDB" id="6C2R">
    <property type="method" value="X-ray"/>
    <property type="resolution" value="1.96 A"/>
    <property type="chains" value="A=125-391"/>
</dbReference>
<dbReference type="PDB" id="6C2T">
    <property type="method" value="X-ray"/>
    <property type="resolution" value="1.73 A"/>
    <property type="chains" value="A=125-391"/>
</dbReference>
<dbReference type="PDB" id="6C83">
    <property type="method" value="X-ray"/>
    <property type="resolution" value="2.55 A"/>
    <property type="chains" value="A/B=122-403"/>
</dbReference>
<dbReference type="PDB" id="6CPE">
    <property type="method" value="X-ray"/>
    <property type="resolution" value="2.45 A"/>
    <property type="chains" value="A=122-403"/>
</dbReference>
<dbReference type="PDB" id="6CPF">
    <property type="method" value="X-ray"/>
    <property type="resolution" value="2.30 A"/>
    <property type="chains" value="A=122-403"/>
</dbReference>
<dbReference type="PDB" id="6CPG">
    <property type="method" value="X-ray"/>
    <property type="resolution" value="2.80 A"/>
    <property type="chains" value="A/D=122-403"/>
</dbReference>
<dbReference type="PDB" id="6GRA">
    <property type="method" value="X-ray"/>
    <property type="resolution" value="2.60 A"/>
    <property type="chains" value="A=122-403"/>
</dbReference>
<dbReference type="PDB" id="6HJJ">
    <property type="method" value="X-ray"/>
    <property type="resolution" value="2.13 A"/>
    <property type="chains" value="A=122-403"/>
</dbReference>
<dbReference type="PDB" id="6HJK">
    <property type="method" value="X-ray"/>
    <property type="resolution" value="2.40 A"/>
    <property type="chains" value="A=122-403"/>
</dbReference>
<dbReference type="PDB" id="6I2U">
    <property type="method" value="X-ray"/>
    <property type="resolution" value="2.50 A"/>
    <property type="chains" value="A=122-403"/>
</dbReference>
<dbReference type="PDB" id="6R49">
    <property type="method" value="X-ray"/>
    <property type="resolution" value="2.21 A"/>
    <property type="chains" value="A=122-403"/>
</dbReference>
<dbReference type="PDB" id="6R4A">
    <property type="method" value="X-ray"/>
    <property type="resolution" value="1.94 A"/>
    <property type="chains" value="A=122-403"/>
</dbReference>
<dbReference type="PDB" id="6R4B">
    <property type="method" value="X-ray"/>
    <property type="resolution" value="2.15 A"/>
    <property type="chains" value="A=122-403"/>
</dbReference>
<dbReference type="PDB" id="6R4C">
    <property type="method" value="X-ray"/>
    <property type="resolution" value="2.04 A"/>
    <property type="chains" value="A=122-403"/>
</dbReference>
<dbReference type="PDB" id="6R4D">
    <property type="method" value="X-ray"/>
    <property type="resolution" value="2.01 A"/>
    <property type="chains" value="A=122-403"/>
</dbReference>
<dbReference type="PDB" id="6VPG">
    <property type="method" value="X-ray"/>
    <property type="resolution" value="2.64 A"/>
    <property type="chains" value="A=117-389"/>
</dbReference>
<dbReference type="PDB" id="6VPH">
    <property type="method" value="X-ray"/>
    <property type="resolution" value="2.14 A"/>
    <property type="chains" value="A=117-389"/>
</dbReference>
<dbReference type="PDB" id="6VPI">
    <property type="method" value="X-ray"/>
    <property type="resolution" value="2.00 A"/>
    <property type="chains" value="A=117-389"/>
</dbReference>
<dbReference type="PDB" id="6VPJ">
    <property type="method" value="X-ray"/>
    <property type="resolution" value="2.10 A"/>
    <property type="chains" value="A=117-389"/>
</dbReference>
<dbReference type="PDB" id="6VPL">
    <property type="method" value="X-ray"/>
    <property type="resolution" value="1.86 A"/>
    <property type="chains" value="A/B=117-389"/>
</dbReference>
<dbReference type="PDB" id="6VPM">
    <property type="method" value="X-ray"/>
    <property type="resolution" value="1.58 A"/>
    <property type="chains" value="A/B=117-389"/>
</dbReference>
<dbReference type="PDB" id="6XKA">
    <property type="method" value="X-ray"/>
    <property type="resolution" value="2.65 A"/>
    <property type="chains" value="A=117-389"/>
</dbReference>
<dbReference type="PDB" id="6Z4Y">
    <property type="method" value="X-ray"/>
    <property type="resolution" value="2.25 A"/>
    <property type="chains" value="A=122-403"/>
</dbReference>
<dbReference type="PDB" id="7AYH">
    <property type="method" value="X-ray"/>
    <property type="resolution" value="2.80 A"/>
    <property type="chains" value="A=122-403"/>
</dbReference>
<dbReference type="PDB" id="7AYI">
    <property type="method" value="X-ray"/>
    <property type="resolution" value="2.86 A"/>
    <property type="chains" value="A=122-403"/>
</dbReference>
<dbReference type="PDB" id="7FIC">
    <property type="method" value="X-ray"/>
    <property type="resolution" value="2.32 A"/>
    <property type="chains" value="A=127-391"/>
</dbReference>
<dbReference type="PDB" id="7O2V">
    <property type="method" value="X-ray"/>
    <property type="resolution" value="3.10 A"/>
    <property type="chains" value="A=116-403"/>
</dbReference>
<dbReference type="PDB" id="7ZTL">
    <property type="method" value="X-ray"/>
    <property type="resolution" value="1.90 A"/>
    <property type="chains" value="A=122-403"/>
</dbReference>
<dbReference type="PDB" id="8C14">
    <property type="method" value="X-ray"/>
    <property type="resolution" value="1.93 A"/>
    <property type="chains" value="A=125-391"/>
</dbReference>
<dbReference type="PDB" id="8C15">
    <property type="method" value="X-ray"/>
    <property type="resolution" value="2.41 A"/>
    <property type="chains" value="A=126-388"/>
</dbReference>
<dbReference type="PDB" id="8C1D">
    <property type="method" value="X-ray"/>
    <property type="resolution" value="2.12 A"/>
    <property type="chains" value="A=126-388"/>
</dbReference>
<dbReference type="PDB" id="8C1E">
    <property type="method" value="X-ray"/>
    <property type="resolution" value="2.80 A"/>
    <property type="chains" value="A=125-391"/>
</dbReference>
<dbReference type="PDB" id="8C1F">
    <property type="method" value="X-ray"/>
    <property type="resolution" value="1.92 A"/>
    <property type="chains" value="A=126-388"/>
</dbReference>
<dbReference type="PDB" id="8C1G">
    <property type="method" value="X-ray"/>
    <property type="resolution" value="1.96 A"/>
    <property type="chains" value="A=126-388"/>
</dbReference>
<dbReference type="PDB" id="8C1H">
    <property type="method" value="X-ray"/>
    <property type="resolution" value="2.23 A"/>
    <property type="chains" value="A=126-388"/>
</dbReference>
<dbReference type="PDB" id="8C1I">
    <property type="method" value="X-ray"/>
    <property type="resolution" value="2.81 A"/>
    <property type="chains" value="A=126-388"/>
</dbReference>
<dbReference type="PDB" id="8C1K">
    <property type="method" value="X-ray"/>
    <property type="resolution" value="2.43 A"/>
    <property type="chains" value="A=126-390"/>
</dbReference>
<dbReference type="PDB" id="8C1M">
    <property type="method" value="X-ray"/>
    <property type="resolution" value="2.84 A"/>
    <property type="chains" value="A=125-391"/>
</dbReference>
<dbReference type="PDB" id="8GUW">
    <property type="method" value="X-ray"/>
    <property type="resolution" value="2.70 A"/>
    <property type="chains" value="A/B/C=123-403"/>
</dbReference>
<dbReference type="PDB" id="8JF4">
    <property type="method" value="X-ray"/>
    <property type="resolution" value="2.89 A"/>
    <property type="chains" value="A=127-389"/>
</dbReference>
<dbReference type="PDB" id="8JG8">
    <property type="method" value="X-ray"/>
    <property type="resolution" value="2.90 A"/>
    <property type="chains" value="A=127-389"/>
</dbReference>
<dbReference type="PDB" id="8JMX">
    <property type="method" value="X-ray"/>
    <property type="resolution" value="2.95 A"/>
    <property type="chains" value="A=127-389"/>
</dbReference>
<dbReference type="PDB" id="8OF5">
    <property type="method" value="X-ray"/>
    <property type="resolution" value="1.97 A"/>
    <property type="chains" value="A=122-403"/>
</dbReference>
<dbReference type="PDB" id="8PR7">
    <property type="method" value="X-ray"/>
    <property type="resolution" value="2.76 A"/>
    <property type="chains" value="A/D=122-403"/>
</dbReference>
<dbReference type="PDB" id="8SSO">
    <property type="method" value="X-ray"/>
    <property type="resolution" value="1.97 A"/>
    <property type="chains" value="A/D=122-403"/>
</dbReference>
<dbReference type="PDB" id="8SSP">
    <property type="method" value="X-ray"/>
    <property type="resolution" value="2.60 A"/>
    <property type="chains" value="A=122-403"/>
</dbReference>
<dbReference type="PDB" id="9BZG">
    <property type="method" value="X-ray"/>
    <property type="resolution" value="1.80 A"/>
    <property type="chains" value="A=122-403"/>
</dbReference>
<dbReference type="PDB" id="9BZL">
    <property type="method" value="X-ray"/>
    <property type="resolution" value="1.81 A"/>
    <property type="chains" value="B=122-403"/>
</dbReference>
<dbReference type="PDBsum" id="1MQ4"/>
<dbReference type="PDBsum" id="1MUO"/>
<dbReference type="PDBsum" id="1OL5"/>
<dbReference type="PDBsum" id="1OL6"/>
<dbReference type="PDBsum" id="1OL7"/>
<dbReference type="PDBsum" id="2BMC"/>
<dbReference type="PDBsum" id="2C6D"/>
<dbReference type="PDBsum" id="2C6E"/>
<dbReference type="PDBsum" id="2DWB"/>
<dbReference type="PDBsum" id="2J4Z"/>
<dbReference type="PDBsum" id="2J50"/>
<dbReference type="PDBsum" id="2NP8"/>
<dbReference type="PDBsum" id="2W1C"/>
<dbReference type="PDBsum" id="2W1D"/>
<dbReference type="PDBsum" id="2W1E"/>
<dbReference type="PDBsum" id="2W1F"/>
<dbReference type="PDBsum" id="2W1G"/>
<dbReference type="PDBsum" id="2WQE"/>
<dbReference type="PDBsum" id="2WTV"/>
<dbReference type="PDBsum" id="2WTW"/>
<dbReference type="PDBsum" id="2X6D"/>
<dbReference type="PDBsum" id="2X6E"/>
<dbReference type="PDBsum" id="2X81"/>
<dbReference type="PDBsum" id="2XNE"/>
<dbReference type="PDBsum" id="2XNG"/>
<dbReference type="PDBsum" id="2XRU"/>
<dbReference type="PDBsum" id="3COH"/>
<dbReference type="PDBsum" id="3E5A"/>
<dbReference type="PDBsum" id="3EFW"/>
<dbReference type="PDBsum" id="3FDN"/>
<dbReference type="PDBsum" id="3H0Y"/>
<dbReference type="PDBsum" id="3H0Z"/>
<dbReference type="PDBsum" id="3H10"/>
<dbReference type="PDBsum" id="3HA6"/>
<dbReference type="PDBsum" id="3K5U"/>
<dbReference type="PDBsum" id="3LAU"/>
<dbReference type="PDBsum" id="3M11"/>
<dbReference type="PDBsum" id="3MYG"/>
<dbReference type="PDBsum" id="3NRM"/>
<dbReference type="PDBsum" id="3O50"/>
<dbReference type="PDBsum" id="3O51"/>
<dbReference type="PDBsum" id="3P9J"/>
<dbReference type="PDBsum" id="3QBN"/>
<dbReference type="PDBsum" id="3R21"/>
<dbReference type="PDBsum" id="3R22"/>
<dbReference type="PDBsum" id="3UNZ"/>
<dbReference type="PDBsum" id="3UO4"/>
<dbReference type="PDBsum" id="3UO5"/>
<dbReference type="PDBsum" id="3UO6"/>
<dbReference type="PDBsum" id="3UOD"/>
<dbReference type="PDBsum" id="3UOH"/>
<dbReference type="PDBsum" id="3UOJ"/>
<dbReference type="PDBsum" id="3UOK"/>
<dbReference type="PDBsum" id="3UOL"/>
<dbReference type="PDBsum" id="3UP2"/>
<dbReference type="PDBsum" id="3UP7"/>
<dbReference type="PDBsum" id="3VAP"/>
<dbReference type="PDBsum" id="3W10"/>
<dbReference type="PDBsum" id="3W16"/>
<dbReference type="PDBsum" id="3W18"/>
<dbReference type="PDBsum" id="3W2C"/>
<dbReference type="PDBsum" id="4B0G"/>
<dbReference type="PDBsum" id="4BN1"/>
<dbReference type="PDBsum" id="4BYI"/>
<dbReference type="PDBsum" id="4BYJ"/>
<dbReference type="PDBsum" id="4C3P"/>
<dbReference type="PDBsum" id="4C3R"/>
<dbReference type="PDBsum" id="4CEG"/>
<dbReference type="PDBsum" id="4DEA"/>
<dbReference type="PDBsum" id="4DEB"/>
<dbReference type="PDBsum" id="4DED"/>
<dbReference type="PDBsum" id="4DEE"/>
<dbReference type="PDBsum" id="4DHF"/>
<dbReference type="PDBsum" id="4J8M"/>
<dbReference type="PDBsum" id="4J8N"/>
<dbReference type="PDBsum" id="4JAI"/>
<dbReference type="PDBsum" id="4JAJ"/>
<dbReference type="PDBsum" id="4JBO"/>
<dbReference type="PDBsum" id="4JBP"/>
<dbReference type="PDBsum" id="4JBQ"/>
<dbReference type="PDBsum" id="4O0S"/>
<dbReference type="PDBsum" id="4O0U"/>
<dbReference type="PDBsum" id="4O0W"/>
<dbReference type="PDBsum" id="4PRJ"/>
<dbReference type="PDBsum" id="4UYN"/>
<dbReference type="PDBsum" id="4UZD"/>
<dbReference type="PDBsum" id="4UZH"/>
<dbReference type="PDBsum" id="4ZS0"/>
<dbReference type="PDBsum" id="4ZTQ"/>
<dbReference type="PDBsum" id="4ZTR"/>
<dbReference type="PDBsum" id="4ZTS"/>
<dbReference type="PDBsum" id="5AAD"/>
<dbReference type="PDBsum" id="5AAE"/>
<dbReference type="PDBsum" id="5AAF"/>
<dbReference type="PDBsum" id="5AAG"/>
<dbReference type="PDBsum" id="5DN3"/>
<dbReference type="PDBsum" id="5DNR"/>
<dbReference type="PDBsum" id="5DOS"/>
<dbReference type="PDBsum" id="5DPV"/>
<dbReference type="PDBsum" id="5DR2"/>
<dbReference type="PDBsum" id="5DR6"/>
<dbReference type="PDBsum" id="5DR9"/>
<dbReference type="PDBsum" id="5DRD"/>
<dbReference type="PDBsum" id="5DT0"/>
<dbReference type="PDBsum" id="5DT3"/>
<dbReference type="PDBsum" id="5DT4"/>
<dbReference type="PDBsum" id="5EW9"/>
<dbReference type="PDBsum" id="5G15"/>
<dbReference type="PDBsum" id="5G1X"/>
<dbReference type="PDBsum" id="5L8J"/>
<dbReference type="PDBsum" id="5L8K"/>
<dbReference type="PDBsum" id="5L8L"/>
<dbReference type="PDBsum" id="5LXM"/>
<dbReference type="PDBsum" id="5OBJ"/>
<dbReference type="PDBsum" id="5OBR"/>
<dbReference type="PDBsum" id="5ODT"/>
<dbReference type="PDBsum" id="5ONE"/>
<dbReference type="PDBsum" id="5ORL"/>
<dbReference type="PDBsum" id="5ORN"/>
<dbReference type="PDBsum" id="5ORO"/>
<dbReference type="PDBsum" id="5ORP"/>
<dbReference type="PDBsum" id="5ORR"/>
<dbReference type="PDBsum" id="5ORS"/>
<dbReference type="PDBsum" id="5ORT"/>
<dbReference type="PDBsum" id="5ORV"/>
<dbReference type="PDBsum" id="5ORW"/>
<dbReference type="PDBsum" id="5ORX"/>
<dbReference type="PDBsum" id="5ORY"/>
<dbReference type="PDBsum" id="5ORZ"/>
<dbReference type="PDBsum" id="5OS0"/>
<dbReference type="PDBsum" id="5OS1"/>
<dbReference type="PDBsum" id="5OS2"/>
<dbReference type="PDBsum" id="5OS3"/>
<dbReference type="PDBsum" id="5OS4"/>
<dbReference type="PDBsum" id="5OS5"/>
<dbReference type="PDBsum" id="5OS6"/>
<dbReference type="PDBsum" id="5OSD"/>
<dbReference type="PDBsum" id="5OSE"/>
<dbReference type="PDBsum" id="5OSF"/>
<dbReference type="PDBsum" id="5ZAN"/>
<dbReference type="PDBsum" id="6C2R"/>
<dbReference type="PDBsum" id="6C2T"/>
<dbReference type="PDBsum" id="6C83"/>
<dbReference type="PDBsum" id="6CPE"/>
<dbReference type="PDBsum" id="6CPF"/>
<dbReference type="PDBsum" id="6CPG"/>
<dbReference type="PDBsum" id="6GRA"/>
<dbReference type="PDBsum" id="6HJJ"/>
<dbReference type="PDBsum" id="6HJK"/>
<dbReference type="PDBsum" id="6I2U"/>
<dbReference type="PDBsum" id="6R49"/>
<dbReference type="PDBsum" id="6R4A"/>
<dbReference type="PDBsum" id="6R4B"/>
<dbReference type="PDBsum" id="6R4C"/>
<dbReference type="PDBsum" id="6R4D"/>
<dbReference type="PDBsum" id="6VPG"/>
<dbReference type="PDBsum" id="6VPH"/>
<dbReference type="PDBsum" id="6VPI"/>
<dbReference type="PDBsum" id="6VPJ"/>
<dbReference type="PDBsum" id="6VPL"/>
<dbReference type="PDBsum" id="6VPM"/>
<dbReference type="PDBsum" id="6XKA"/>
<dbReference type="PDBsum" id="6Z4Y"/>
<dbReference type="PDBsum" id="7AYH"/>
<dbReference type="PDBsum" id="7AYI"/>
<dbReference type="PDBsum" id="7FIC"/>
<dbReference type="PDBsum" id="7O2V"/>
<dbReference type="PDBsum" id="7ZTL"/>
<dbReference type="PDBsum" id="8C14"/>
<dbReference type="PDBsum" id="8C15"/>
<dbReference type="PDBsum" id="8C1D"/>
<dbReference type="PDBsum" id="8C1E"/>
<dbReference type="PDBsum" id="8C1F"/>
<dbReference type="PDBsum" id="8C1G"/>
<dbReference type="PDBsum" id="8C1H"/>
<dbReference type="PDBsum" id="8C1I"/>
<dbReference type="PDBsum" id="8C1K"/>
<dbReference type="PDBsum" id="8C1M"/>
<dbReference type="PDBsum" id="8GUW"/>
<dbReference type="PDBsum" id="8JF4"/>
<dbReference type="PDBsum" id="8JG8"/>
<dbReference type="PDBsum" id="8JMX"/>
<dbReference type="PDBsum" id="8OF5"/>
<dbReference type="PDBsum" id="8PR7"/>
<dbReference type="PDBsum" id="8SSO"/>
<dbReference type="PDBsum" id="8SSP"/>
<dbReference type="PDBsum" id="9BZG"/>
<dbReference type="PDBsum" id="9BZL"/>
<dbReference type="SMR" id="O14965"/>
<dbReference type="BioGRID" id="112666">
    <property type="interactions" value="697"/>
</dbReference>
<dbReference type="CORUM" id="O14965"/>
<dbReference type="DIP" id="DIP-33068N"/>
<dbReference type="ELM" id="O14965"/>
<dbReference type="FunCoup" id="O14965">
    <property type="interactions" value="1695"/>
</dbReference>
<dbReference type="IntAct" id="O14965">
    <property type="interactions" value="204"/>
</dbReference>
<dbReference type="MINT" id="O14965"/>
<dbReference type="STRING" id="9606.ENSP00000216911"/>
<dbReference type="BindingDB" id="O14965"/>
<dbReference type="ChEMBL" id="CHEMBL4722"/>
<dbReference type="DrugBank" id="DB07362">
    <property type="generic name" value="1-(5-{2-[(1-methyl-1H-pyrazolo[4,3-d]pyrimidin-7-yl)amino]ethyl}-1,3-thiazol-2-yl)-3-[3-(trifluoromethyl)phenyl]urea"/>
</dbReference>
<dbReference type="DrugBank" id="DB07360">
    <property type="generic name" value="1-{5-[2-(thieno[3,2-d]pyrimidin-4-ylamino)ethyl]-1,3-thiazol-2-yl}-3-[3-(trifluoromethyl)phenyl]urea"/>
</dbReference>
<dbReference type="DrugBank" id="DB08065">
    <property type="generic name" value="2-(1H-pyrazol-3-yl)-1H-benzimidazole"/>
</dbReference>
<dbReference type="DrugBank" id="DB07186">
    <property type="generic name" value="4-(4-METHYLPIPERAZIN-1-YL)-N-[5-(2-THIENYLACETYL)-1,5-DIHYDROPYRROLO[3,4-C]PYRAZOL-3-YL]BENZAMIDE"/>
</dbReference>
<dbReference type="DrugBank" id="DB07266">
    <property type="generic name" value="AKI-001"/>
</dbReference>
<dbReference type="DrugBank" id="DB05220">
    <property type="generic name" value="Alisertib"/>
</dbReference>
<dbReference type="DrugBank" id="DB17197">
    <property type="generic name" value="AMG-900"/>
</dbReference>
<dbReference type="DrugBank" id="DB05169">
    <property type="generic name" value="AT9283"/>
</dbReference>
<dbReference type="DrugBank" id="DB06347">
    <property type="generic name" value="Cenisertib"/>
</dbReference>
<dbReference type="DrugBank" id="DB05198">
    <property type="generic name" value="CYC116"/>
</dbReference>
<dbReference type="DrugBank" id="DB11778">
    <property type="generic name" value="Danusertib"/>
</dbReference>
<dbReference type="DrugBank" id="DB16891">
    <property type="generic name" value="ENMD-981693"/>
</dbReference>
<dbReference type="DrugBank" id="DB06486">
    <property type="generic name" value="Enzastaurin"/>
</dbReference>
<dbReference type="DrugBank" id="DB18019">
    <property type="generic name" value="Erbumine"/>
</dbReference>
<dbReference type="DrugBank" id="DB12010">
    <property type="generic name" value="Fostamatinib"/>
</dbReference>
<dbReference type="DrugBank" id="DB11694">
    <property type="generic name" value="Ilorasertib"/>
</dbReference>
<dbReference type="DrugBank" id="DB12556">
    <property type="generic name" value="MK-5108"/>
</dbReference>
<dbReference type="DrugBank" id="DB13061">
    <property type="generic name" value="MLN8054"/>
</dbReference>
<dbReference type="DrugBank" id="DB08066">
    <property type="generic name" value="N-[3-(1H-BENZIMIDAZOL-2-YL)-1H-PYRAZOL-4-YL]BENZAMIDE"/>
</dbReference>
<dbReference type="DrugBank" id="DB07801">
    <property type="generic name" value="N-butyl-3-{[6-(9H-purin-6-ylamino)hexanoyl]amino}benzamide"/>
</dbReference>
<dbReference type="DrugBank" id="DB07545">
    <property type="generic name" value="N-{3-[(4-{[3-(TRIFLUOROMETHYL)PHENYL]AMINO}PYRIMIDIN-2-YL)AMINO]PHENYL}CYCLOPROPANECARBOXAMIDE"/>
</dbReference>
<dbReference type="DrugBank" id="DB12072">
    <property type="generic name" value="Orantinib"/>
</dbReference>
<dbReference type="DrugBank" id="DB13059">
    <property type="generic name" value="PF-03814735"/>
</dbReference>
<dbReference type="DrugBank" id="DB02482">
    <property type="generic name" value="Phosphonothreonine"/>
</dbReference>
<dbReference type="DrugBank" id="DB06134">
    <property type="generic name" value="SNS-314"/>
</dbReference>
<dbReference type="DrugCentral" id="O14965"/>
<dbReference type="GuidetoPHARMACOLOGY" id="1936"/>
<dbReference type="GlyGen" id="O14965">
    <property type="glycosylation" value="4 sites, 1 O-linked glycan (1 site)"/>
</dbReference>
<dbReference type="iPTMnet" id="O14965"/>
<dbReference type="PhosphoSitePlus" id="O14965"/>
<dbReference type="BioMuta" id="AURKA"/>
<dbReference type="CPTAC" id="CPTAC-1341"/>
<dbReference type="CPTAC" id="CPTAC-3083"/>
<dbReference type="CPTAC" id="CPTAC-3084"/>
<dbReference type="jPOST" id="O14965"/>
<dbReference type="MassIVE" id="O14965"/>
<dbReference type="PaxDb" id="9606-ENSP00000216911"/>
<dbReference type="PeptideAtlas" id="O14965"/>
<dbReference type="ProteomicsDB" id="48339"/>
<dbReference type="Pumba" id="O14965"/>
<dbReference type="ABCD" id="O14965">
    <property type="antibodies" value="7 sequenced antibodies"/>
</dbReference>
<dbReference type="Antibodypedia" id="1129">
    <property type="antibodies" value="1077 antibodies from 46 providers"/>
</dbReference>
<dbReference type="DNASU" id="6790"/>
<dbReference type="Ensembl" id="ENST00000312783.10">
    <property type="protein sequence ID" value="ENSP00000321591.6"/>
    <property type="gene ID" value="ENSG00000087586.18"/>
</dbReference>
<dbReference type="Ensembl" id="ENST00000347343.6">
    <property type="protein sequence ID" value="ENSP00000216911.2"/>
    <property type="gene ID" value="ENSG00000087586.18"/>
</dbReference>
<dbReference type="Ensembl" id="ENST00000371356.6">
    <property type="protein sequence ID" value="ENSP00000360407.2"/>
    <property type="gene ID" value="ENSG00000087586.18"/>
</dbReference>
<dbReference type="Ensembl" id="ENST00000395911.5">
    <property type="protein sequence ID" value="ENSP00000379247.1"/>
    <property type="gene ID" value="ENSG00000087586.18"/>
</dbReference>
<dbReference type="Ensembl" id="ENST00000395913.7">
    <property type="protein sequence ID" value="ENSP00000379249.3"/>
    <property type="gene ID" value="ENSG00000087586.18"/>
</dbReference>
<dbReference type="Ensembl" id="ENST00000395914.5">
    <property type="protein sequence ID" value="ENSP00000379250.1"/>
    <property type="gene ID" value="ENSG00000087586.18"/>
</dbReference>
<dbReference type="Ensembl" id="ENST00000395915.8">
    <property type="protein sequence ID" value="ENSP00000379251.3"/>
    <property type="gene ID" value="ENSG00000087586.18"/>
</dbReference>
<dbReference type="GeneID" id="6790"/>
<dbReference type="KEGG" id="hsa:6790"/>
<dbReference type="MANE-Select" id="ENST00000395915.8">
    <property type="protein sequence ID" value="ENSP00000379251.3"/>
    <property type="RefSeq nucleotide sequence ID" value="NM_198437.3"/>
    <property type="RefSeq protein sequence ID" value="NP_940839.1"/>
</dbReference>
<dbReference type="UCSC" id="uc002xxe.1">
    <property type="organism name" value="human"/>
</dbReference>
<dbReference type="AGR" id="HGNC:11393"/>
<dbReference type="CTD" id="6790"/>
<dbReference type="DisGeNET" id="6790"/>
<dbReference type="GeneCards" id="AURKA"/>
<dbReference type="HGNC" id="HGNC:11393">
    <property type="gene designation" value="AURKA"/>
</dbReference>
<dbReference type="HPA" id="ENSG00000087586">
    <property type="expression patterns" value="Tissue enhanced (lymphoid tissue, testis)"/>
</dbReference>
<dbReference type="MalaCards" id="AURKA"/>
<dbReference type="MIM" id="603072">
    <property type="type" value="gene"/>
</dbReference>
<dbReference type="neXtProt" id="NX_O14965"/>
<dbReference type="OpenTargets" id="ENSG00000087586"/>
<dbReference type="PharmGKB" id="PA36201"/>
<dbReference type="VEuPathDB" id="HostDB:ENSG00000087586"/>
<dbReference type="eggNOG" id="KOG0580">
    <property type="taxonomic scope" value="Eukaryota"/>
</dbReference>
<dbReference type="GeneTree" id="ENSGT00940000154900"/>
<dbReference type="InParanoid" id="O14965"/>
<dbReference type="OMA" id="KIMNLMF"/>
<dbReference type="OrthoDB" id="377346at2759"/>
<dbReference type="PAN-GO" id="O14965">
    <property type="GO annotations" value="6 GO annotations based on evolutionary models"/>
</dbReference>
<dbReference type="PhylomeDB" id="O14965"/>
<dbReference type="TreeFam" id="TF105331"/>
<dbReference type="BRENDA" id="2.7.11.1">
    <property type="organism ID" value="2681"/>
</dbReference>
<dbReference type="PathwayCommons" id="O14965"/>
<dbReference type="Reactome" id="R-HSA-174178">
    <property type="pathway name" value="APC/C:Cdh1 mediated degradation of Cdc20 and other APC/C:Cdh1 targeted proteins in late mitosis/early G1"/>
</dbReference>
<dbReference type="Reactome" id="R-HSA-2565942">
    <property type="pathway name" value="Regulation of PLK1 Activity at G2/M Transition"/>
</dbReference>
<dbReference type="Reactome" id="R-HSA-4615885">
    <property type="pathway name" value="SUMOylation of DNA replication proteins"/>
</dbReference>
<dbReference type="Reactome" id="R-HSA-6804114">
    <property type="pathway name" value="TP53 Regulates Transcription of Genes Involved in G2 Cell Cycle Arrest"/>
</dbReference>
<dbReference type="Reactome" id="R-HSA-6804756">
    <property type="pathway name" value="Regulation of TP53 Activity through Phosphorylation"/>
</dbReference>
<dbReference type="Reactome" id="R-HSA-8854050">
    <property type="pathway name" value="FBXL7 down-regulates AURKA during mitotic entry and in early mitosis"/>
</dbReference>
<dbReference type="Reactome" id="R-HSA-8854518">
    <property type="pathway name" value="AURKA Activation by TPX2"/>
</dbReference>
<dbReference type="Reactome" id="R-HSA-8854521">
    <property type="pathway name" value="Interaction between PHLDA1 and AURKA"/>
</dbReference>
<dbReference type="SignaLink" id="O14965"/>
<dbReference type="SIGNOR" id="O14965"/>
<dbReference type="BioGRID-ORCS" id="6790">
    <property type="hits" value="713 hits in 1214 CRISPR screens"/>
</dbReference>
<dbReference type="CD-CODE" id="8C2F96ED">
    <property type="entry name" value="Centrosome"/>
</dbReference>
<dbReference type="ChiTaRS" id="AURKA">
    <property type="organism name" value="human"/>
</dbReference>
<dbReference type="EvolutionaryTrace" id="O14965"/>
<dbReference type="GeneWiki" id="Aurora_A_kinase"/>
<dbReference type="GenomeRNAi" id="6790"/>
<dbReference type="Pharos" id="O14965">
    <property type="development level" value="Tchem"/>
</dbReference>
<dbReference type="PRO" id="PR:O14965"/>
<dbReference type="Proteomes" id="UP000005640">
    <property type="component" value="Chromosome 20"/>
</dbReference>
<dbReference type="RNAct" id="O14965">
    <property type="molecule type" value="protein"/>
</dbReference>
<dbReference type="Bgee" id="ENSG00000087586">
    <property type="expression patterns" value="Expressed in oocyte and 159 other cell types or tissues"/>
</dbReference>
<dbReference type="ExpressionAtlas" id="O14965">
    <property type="expression patterns" value="baseline and differential"/>
</dbReference>
<dbReference type="GO" id="GO:0043203">
    <property type="term" value="C:axon hillock"/>
    <property type="evidence" value="ECO:0007669"/>
    <property type="project" value="Ensembl"/>
</dbReference>
<dbReference type="GO" id="GO:0016323">
    <property type="term" value="C:basolateral plasma membrane"/>
    <property type="evidence" value="ECO:0000250"/>
    <property type="project" value="UniProtKB"/>
</dbReference>
<dbReference type="GO" id="GO:0005814">
    <property type="term" value="C:centriole"/>
    <property type="evidence" value="ECO:0007669"/>
    <property type="project" value="UniProtKB-SubCell"/>
</dbReference>
<dbReference type="GO" id="GO:0005813">
    <property type="term" value="C:centrosome"/>
    <property type="evidence" value="ECO:0000314"/>
    <property type="project" value="UniProtKB"/>
</dbReference>
<dbReference type="GO" id="GO:0032133">
    <property type="term" value="C:chromosome passenger complex"/>
    <property type="evidence" value="ECO:0000318"/>
    <property type="project" value="GO_Central"/>
</dbReference>
<dbReference type="GO" id="GO:0036064">
    <property type="term" value="C:ciliary basal body"/>
    <property type="evidence" value="ECO:0000314"/>
    <property type="project" value="UniProtKB"/>
</dbReference>
<dbReference type="GO" id="GO:0005829">
    <property type="term" value="C:cytosol"/>
    <property type="evidence" value="ECO:0000314"/>
    <property type="project" value="HPA"/>
</dbReference>
<dbReference type="GO" id="GO:0042585">
    <property type="term" value="C:germinal vesicle"/>
    <property type="evidence" value="ECO:0007669"/>
    <property type="project" value="Ensembl"/>
</dbReference>
<dbReference type="GO" id="GO:0098978">
    <property type="term" value="C:glutamatergic synapse"/>
    <property type="evidence" value="ECO:0007669"/>
    <property type="project" value="Ensembl"/>
</dbReference>
<dbReference type="GO" id="GO:0000776">
    <property type="term" value="C:kinetochore"/>
    <property type="evidence" value="ECO:0000318"/>
    <property type="project" value="GO_Central"/>
</dbReference>
<dbReference type="GO" id="GO:0072687">
    <property type="term" value="C:meiotic spindle"/>
    <property type="evidence" value="ECO:0007669"/>
    <property type="project" value="Ensembl"/>
</dbReference>
<dbReference type="GO" id="GO:0005874">
    <property type="term" value="C:microtubule"/>
    <property type="evidence" value="ECO:0007669"/>
    <property type="project" value="UniProtKB-KW"/>
</dbReference>
<dbReference type="GO" id="GO:0015630">
    <property type="term" value="C:microtubule cytoskeleton"/>
    <property type="evidence" value="ECO:0000314"/>
    <property type="project" value="BHF-UCL"/>
</dbReference>
<dbReference type="GO" id="GO:0030496">
    <property type="term" value="C:midbody"/>
    <property type="evidence" value="ECO:0000304"/>
    <property type="project" value="UniProtKB"/>
</dbReference>
<dbReference type="GO" id="GO:0072686">
    <property type="term" value="C:mitotic spindle"/>
    <property type="evidence" value="ECO:0000314"/>
    <property type="project" value="HPA"/>
</dbReference>
<dbReference type="GO" id="GO:0097431">
    <property type="term" value="C:mitotic spindle pole"/>
    <property type="evidence" value="ECO:0000314"/>
    <property type="project" value="UniProtKB"/>
</dbReference>
<dbReference type="GO" id="GO:0005654">
    <property type="term" value="C:nucleoplasm"/>
    <property type="evidence" value="ECO:0000314"/>
    <property type="project" value="HPA"/>
</dbReference>
<dbReference type="GO" id="GO:0005634">
    <property type="term" value="C:nucleus"/>
    <property type="evidence" value="ECO:0000314"/>
    <property type="project" value="BHF-UCL"/>
</dbReference>
<dbReference type="GO" id="GO:0048471">
    <property type="term" value="C:perinuclear region of cytoplasm"/>
    <property type="evidence" value="ECO:0000314"/>
    <property type="project" value="BHF-UCL"/>
</dbReference>
<dbReference type="GO" id="GO:0014069">
    <property type="term" value="C:postsynaptic density"/>
    <property type="evidence" value="ECO:0007669"/>
    <property type="project" value="Ensembl"/>
</dbReference>
<dbReference type="GO" id="GO:0045120">
    <property type="term" value="C:pronucleus"/>
    <property type="evidence" value="ECO:0007669"/>
    <property type="project" value="Ensembl"/>
</dbReference>
<dbReference type="GO" id="GO:0005819">
    <property type="term" value="C:spindle"/>
    <property type="evidence" value="ECO:0000304"/>
    <property type="project" value="UniProtKB"/>
</dbReference>
<dbReference type="GO" id="GO:0051233">
    <property type="term" value="C:spindle midzone"/>
    <property type="evidence" value="ECO:0000318"/>
    <property type="project" value="GO_Central"/>
</dbReference>
<dbReference type="GO" id="GO:0000922">
    <property type="term" value="C:spindle pole"/>
    <property type="evidence" value="ECO:0000318"/>
    <property type="project" value="GO_Central"/>
</dbReference>
<dbReference type="GO" id="GO:0031616">
    <property type="term" value="C:spindle pole centrosome"/>
    <property type="evidence" value="ECO:0000314"/>
    <property type="project" value="BHF-UCL"/>
</dbReference>
<dbReference type="GO" id="GO:0005524">
    <property type="term" value="F:ATP binding"/>
    <property type="evidence" value="ECO:0007669"/>
    <property type="project" value="UniProtKB-KW"/>
</dbReference>
<dbReference type="GO" id="GO:0035175">
    <property type="term" value="F:histone H3S10 kinase activity"/>
    <property type="evidence" value="ECO:0007669"/>
    <property type="project" value="Ensembl"/>
</dbReference>
<dbReference type="GO" id="GO:0140677">
    <property type="term" value="F:molecular function activator activity"/>
    <property type="evidence" value="ECO:0000269"/>
    <property type="project" value="DisProt"/>
</dbReference>
<dbReference type="GO" id="GO:0046982">
    <property type="term" value="F:protein heterodimerization activity"/>
    <property type="evidence" value="ECO:0000353"/>
    <property type="project" value="CAFA"/>
</dbReference>
<dbReference type="GO" id="GO:0004672">
    <property type="term" value="F:protein kinase activity"/>
    <property type="evidence" value="ECO:0000314"/>
    <property type="project" value="UniProtKB"/>
</dbReference>
<dbReference type="GO" id="GO:0019901">
    <property type="term" value="F:protein kinase binding"/>
    <property type="evidence" value="ECO:0000353"/>
    <property type="project" value="UniProtKB"/>
</dbReference>
<dbReference type="GO" id="GO:0106310">
    <property type="term" value="F:protein serine kinase activity"/>
    <property type="evidence" value="ECO:0007669"/>
    <property type="project" value="RHEA"/>
</dbReference>
<dbReference type="GO" id="GO:0004674">
    <property type="term" value="F:protein serine/threonine kinase activity"/>
    <property type="evidence" value="ECO:0000315"/>
    <property type="project" value="UniProtKB"/>
</dbReference>
<dbReference type="GO" id="GO:0004712">
    <property type="term" value="F:protein serine/threonine/tyrosine kinase activity"/>
    <property type="evidence" value="ECO:0000304"/>
    <property type="project" value="UniProtKB"/>
</dbReference>
<dbReference type="GO" id="GO:0031625">
    <property type="term" value="F:ubiquitin protein ligase binding"/>
    <property type="evidence" value="ECO:0007669"/>
    <property type="project" value="Ensembl"/>
</dbReference>
<dbReference type="GO" id="GO:0009948">
    <property type="term" value="P:anterior/posterior axis specification"/>
    <property type="evidence" value="ECO:0007669"/>
    <property type="project" value="Ensembl"/>
</dbReference>
<dbReference type="GO" id="GO:0006915">
    <property type="term" value="P:apoptotic process"/>
    <property type="evidence" value="ECO:0007669"/>
    <property type="project" value="Ensembl"/>
</dbReference>
<dbReference type="GO" id="GO:0051301">
    <property type="term" value="P:cell division"/>
    <property type="evidence" value="ECO:0007669"/>
    <property type="project" value="UniProtKB-KW"/>
</dbReference>
<dbReference type="GO" id="GO:0051642">
    <property type="term" value="P:centrosome localization"/>
    <property type="evidence" value="ECO:0007669"/>
    <property type="project" value="Ensembl"/>
</dbReference>
<dbReference type="GO" id="GO:0061523">
    <property type="term" value="P:cilium disassembly"/>
    <property type="evidence" value="ECO:0000315"/>
    <property type="project" value="UniProtKB"/>
</dbReference>
<dbReference type="GO" id="GO:0000086">
    <property type="term" value="P:G2/M transition of mitotic cell cycle"/>
    <property type="evidence" value="ECO:0000304"/>
    <property type="project" value="Reactome"/>
</dbReference>
<dbReference type="GO" id="GO:0097421">
    <property type="term" value="P:liver regeneration"/>
    <property type="evidence" value="ECO:0000314"/>
    <property type="project" value="MGI"/>
</dbReference>
<dbReference type="GO" id="GO:0000278">
    <property type="term" value="P:mitotic cell cycle"/>
    <property type="evidence" value="ECO:0000304"/>
    <property type="project" value="ProtInc"/>
</dbReference>
<dbReference type="GO" id="GO:0007100">
    <property type="term" value="P:mitotic centrosome separation"/>
    <property type="evidence" value="ECO:0007669"/>
    <property type="project" value="Ensembl"/>
</dbReference>
<dbReference type="GO" id="GO:0007052">
    <property type="term" value="P:mitotic spindle organization"/>
    <property type="evidence" value="ECO:0000318"/>
    <property type="project" value="GO_Central"/>
</dbReference>
<dbReference type="GO" id="GO:0043066">
    <property type="term" value="P:negative regulation of apoptotic process"/>
    <property type="evidence" value="ECO:0007669"/>
    <property type="project" value="Ensembl"/>
</dbReference>
<dbReference type="GO" id="GO:0010629">
    <property type="term" value="P:negative regulation of gene expression"/>
    <property type="evidence" value="ECO:0000315"/>
    <property type="project" value="UniProtKB"/>
</dbReference>
<dbReference type="GO" id="GO:0032091">
    <property type="term" value="P:negative regulation of protein binding"/>
    <property type="evidence" value="ECO:0000314"/>
    <property type="project" value="UniProtKB"/>
</dbReference>
<dbReference type="GO" id="GO:1990138">
    <property type="term" value="P:neuron projection extension"/>
    <property type="evidence" value="ECO:0007669"/>
    <property type="project" value="Ensembl"/>
</dbReference>
<dbReference type="GO" id="GO:0018105">
    <property type="term" value="P:peptidyl-serine phosphorylation"/>
    <property type="evidence" value="ECO:0000315"/>
    <property type="project" value="UniProtKB"/>
</dbReference>
<dbReference type="GO" id="GO:0090141">
    <property type="term" value="P:positive regulation of mitochondrial fission"/>
    <property type="evidence" value="ECO:0000315"/>
    <property type="project" value="UniProtKB"/>
</dbReference>
<dbReference type="GO" id="GO:0045931">
    <property type="term" value="P:positive regulation of mitotic cell cycle"/>
    <property type="evidence" value="ECO:0000250"/>
    <property type="project" value="UniProtKB"/>
</dbReference>
<dbReference type="GO" id="GO:0045840">
    <property type="term" value="P:positive regulation of mitotic nuclear division"/>
    <property type="evidence" value="ECO:0000304"/>
    <property type="project" value="UniProtKB"/>
</dbReference>
<dbReference type="GO" id="GO:1900195">
    <property type="term" value="P:positive regulation of oocyte maturation"/>
    <property type="evidence" value="ECO:0007669"/>
    <property type="project" value="Ensembl"/>
</dbReference>
<dbReference type="GO" id="GO:0032436">
    <property type="term" value="P:positive regulation of proteasomal ubiquitin-dependent protein catabolic process"/>
    <property type="evidence" value="ECO:0007669"/>
    <property type="project" value="Ensembl"/>
</dbReference>
<dbReference type="GO" id="GO:0043161">
    <property type="term" value="P:proteasome-mediated ubiquitin-dependent protein catabolic process"/>
    <property type="evidence" value="ECO:0007669"/>
    <property type="project" value="Ensembl"/>
</dbReference>
<dbReference type="GO" id="GO:0046777">
    <property type="term" value="P:protein autophosphorylation"/>
    <property type="evidence" value="ECO:0000304"/>
    <property type="project" value="UniProtKB"/>
</dbReference>
<dbReference type="GO" id="GO:0071539">
    <property type="term" value="P:protein localization to centrosome"/>
    <property type="evidence" value="ECO:0007669"/>
    <property type="project" value="Ensembl"/>
</dbReference>
<dbReference type="GO" id="GO:0006468">
    <property type="term" value="P:protein phosphorylation"/>
    <property type="evidence" value="ECO:0000314"/>
    <property type="project" value="UniProtKB"/>
</dbReference>
<dbReference type="GO" id="GO:0046605">
    <property type="term" value="P:regulation of centrosome cycle"/>
    <property type="evidence" value="ECO:0000304"/>
    <property type="project" value="UniProtKB"/>
</dbReference>
<dbReference type="GO" id="GO:0032465">
    <property type="term" value="P:regulation of cytokinesis"/>
    <property type="evidence" value="ECO:0000318"/>
    <property type="project" value="GO_Central"/>
</dbReference>
<dbReference type="GO" id="GO:0010389">
    <property type="term" value="P:regulation of G2/M transition of mitotic cell cycle"/>
    <property type="evidence" value="ECO:0000304"/>
    <property type="project" value="Reactome"/>
</dbReference>
<dbReference type="GO" id="GO:0031647">
    <property type="term" value="P:regulation of protein stability"/>
    <property type="evidence" value="ECO:0000315"/>
    <property type="project" value="UniProtKB"/>
</dbReference>
<dbReference type="GO" id="GO:1901796">
    <property type="term" value="P:regulation of signal transduction by p53 class mediator"/>
    <property type="evidence" value="ECO:0000304"/>
    <property type="project" value="Reactome"/>
</dbReference>
<dbReference type="GO" id="GO:0009611">
    <property type="term" value="P:response to wounding"/>
    <property type="evidence" value="ECO:0000314"/>
    <property type="project" value="MGI"/>
</dbReference>
<dbReference type="GO" id="GO:0007057">
    <property type="term" value="P:spindle assembly involved in female meiosis I"/>
    <property type="evidence" value="ECO:0007669"/>
    <property type="project" value="Ensembl"/>
</dbReference>
<dbReference type="GO" id="GO:0007051">
    <property type="term" value="P:spindle organization"/>
    <property type="evidence" value="ECO:0000315"/>
    <property type="project" value="UniProtKB"/>
</dbReference>
<dbReference type="CDD" id="cd14116">
    <property type="entry name" value="STKc_Aurora-A"/>
    <property type="match status" value="1"/>
</dbReference>
<dbReference type="FunFam" id="3.30.200.20:FF:000042">
    <property type="entry name" value="Aurora kinase A"/>
    <property type="match status" value="1"/>
</dbReference>
<dbReference type="FunFam" id="1.10.510.10:FF:000235">
    <property type="entry name" value="Serine/threonine-protein kinase ark1"/>
    <property type="match status" value="1"/>
</dbReference>
<dbReference type="Gene3D" id="3.30.200.20">
    <property type="entry name" value="Phosphorylase Kinase, domain 1"/>
    <property type="match status" value="1"/>
</dbReference>
<dbReference type="Gene3D" id="1.10.510.10">
    <property type="entry name" value="Transferase(Phosphotransferase) domain 1"/>
    <property type="match status" value="1"/>
</dbReference>
<dbReference type="InterPro" id="IPR030616">
    <property type="entry name" value="Aur-like"/>
</dbReference>
<dbReference type="InterPro" id="IPR030611">
    <property type="entry name" value="AURKA"/>
</dbReference>
<dbReference type="InterPro" id="IPR011009">
    <property type="entry name" value="Kinase-like_dom_sf"/>
</dbReference>
<dbReference type="InterPro" id="IPR000719">
    <property type="entry name" value="Prot_kinase_dom"/>
</dbReference>
<dbReference type="InterPro" id="IPR017441">
    <property type="entry name" value="Protein_kinase_ATP_BS"/>
</dbReference>
<dbReference type="InterPro" id="IPR008271">
    <property type="entry name" value="Ser/Thr_kinase_AS"/>
</dbReference>
<dbReference type="PANTHER" id="PTHR24350">
    <property type="entry name" value="SERINE/THREONINE-PROTEIN KINASE IAL-RELATED"/>
    <property type="match status" value="1"/>
</dbReference>
<dbReference type="Pfam" id="PF00069">
    <property type="entry name" value="Pkinase"/>
    <property type="match status" value="1"/>
</dbReference>
<dbReference type="SMART" id="SM00220">
    <property type="entry name" value="S_TKc"/>
    <property type="match status" value="1"/>
</dbReference>
<dbReference type="SUPFAM" id="SSF56112">
    <property type="entry name" value="Protein kinase-like (PK-like)"/>
    <property type="match status" value="1"/>
</dbReference>
<dbReference type="PROSITE" id="PS00107">
    <property type="entry name" value="PROTEIN_KINASE_ATP"/>
    <property type="match status" value="1"/>
</dbReference>
<dbReference type="PROSITE" id="PS50011">
    <property type="entry name" value="PROTEIN_KINASE_DOM"/>
    <property type="match status" value="1"/>
</dbReference>
<dbReference type="PROSITE" id="PS00108">
    <property type="entry name" value="PROTEIN_KINASE_ST"/>
    <property type="match status" value="1"/>
</dbReference>